<feature type="chain" id="PRO_0000053693" description="Progesterone receptor">
    <location>
        <begin position="1"/>
        <end position="933"/>
    </location>
</feature>
<feature type="domain" description="NR LBD" evidence="4">
    <location>
        <begin position="679"/>
        <end position="913"/>
    </location>
</feature>
<feature type="DNA-binding region" description="Nuclear receptor" evidence="3">
    <location>
        <begin position="567"/>
        <end position="639"/>
    </location>
</feature>
<feature type="zinc finger region" description="NR C4-type" evidence="3">
    <location>
        <begin position="567"/>
        <end position="587"/>
    </location>
</feature>
<feature type="zinc finger region" description="NR C4-type" evidence="3">
    <location>
        <begin position="603"/>
        <end position="627"/>
    </location>
</feature>
<feature type="region of interest" description="Modulating, Pro-Rich">
    <location>
        <begin position="1"/>
        <end position="566"/>
    </location>
</feature>
<feature type="region of interest" description="AF3; mediates transcriptional activation (in isoform B)" evidence="11">
    <location>
        <begin position="1"/>
        <end position="164"/>
    </location>
</feature>
<feature type="region of interest" description="Disordered" evidence="5">
    <location>
        <begin position="1"/>
        <end position="157"/>
    </location>
</feature>
<feature type="region of interest" description="Mediates transcriptional transrepression (in isoform A)" evidence="36">
    <location>
        <begin position="165"/>
        <end position="305"/>
    </location>
</feature>
<feature type="region of interest" description="Disordered" evidence="5">
    <location>
        <begin position="195"/>
        <end position="241"/>
    </location>
</feature>
<feature type="region of interest" description="Disordered" evidence="5">
    <location>
        <begin position="331"/>
        <end position="351"/>
    </location>
</feature>
<feature type="region of interest" description="Disordered" evidence="5">
    <location>
        <begin position="415"/>
        <end position="452"/>
    </location>
</feature>
<feature type="region of interest" description="AF1; mediates transcriptional activation" evidence="18">
    <location>
        <begin position="456"/>
        <end position="546"/>
    </location>
</feature>
<feature type="region of interest" description="AF2; mediates transcriptional activation" evidence="18">
    <location>
        <begin position="687"/>
        <end position="933"/>
    </location>
</feature>
<feature type="short sequence motif" description="LXXL motif 1" evidence="45">
    <location>
        <begin position="55"/>
        <end position="59"/>
    </location>
</feature>
<feature type="short sequence motif" description="LXXL motif 2" evidence="45">
    <location>
        <begin position="115"/>
        <end position="119"/>
    </location>
</feature>
<feature type="short sequence motif" description="Nuclear localization signal" evidence="2">
    <location>
        <begin position="183"/>
        <end position="187"/>
    </location>
</feature>
<feature type="compositionally biased region" description="Acidic residues" evidence="5">
    <location>
        <begin position="220"/>
        <end position="231"/>
    </location>
</feature>
<feature type="compositionally biased region" description="Low complexity" evidence="5">
    <location>
        <begin position="232"/>
        <end position="241"/>
    </location>
</feature>
<feature type="compositionally biased region" description="Low complexity" evidence="5">
    <location>
        <begin position="335"/>
        <end position="350"/>
    </location>
</feature>
<feature type="compositionally biased region" description="Pro residues" evidence="5">
    <location>
        <begin position="418"/>
        <end position="429"/>
    </location>
</feature>
<feature type="compositionally biased region" description="Low complexity" evidence="5">
    <location>
        <begin position="430"/>
        <end position="452"/>
    </location>
</feature>
<feature type="binding site" evidence="37">
    <location>
        <position position="766"/>
    </location>
    <ligand>
        <name>progesterone</name>
        <dbReference type="ChEBI" id="CHEBI:17026"/>
    </ligand>
</feature>
<feature type="modified residue" description="Phosphoserine" evidence="10">
    <location>
        <position position="20"/>
    </location>
</feature>
<feature type="modified residue" description="Phosphoserine" evidence="30 34">
    <location>
        <position position="81"/>
    </location>
</feature>
<feature type="modified residue" description="Phosphoserine" evidence="10 34">
    <location>
        <position position="102"/>
    </location>
</feature>
<feature type="modified residue" description="Phosphoserine" evidence="10">
    <location>
        <position position="130"/>
    </location>
</feature>
<feature type="modified residue" description="Phosphoserine" evidence="10 17 30 34 35 46">
    <location>
        <position position="162"/>
    </location>
</feature>
<feature type="modified residue" description="Phosphoserine" evidence="6 10 17 35">
    <location>
        <position position="190"/>
    </location>
</feature>
<feature type="modified residue" description="Phosphoserine" evidence="10">
    <location>
        <position position="213"/>
    </location>
</feature>
<feature type="modified residue" description="Phosphoserine; by MAPK1" evidence="6 7 17 21 23 24 34">
    <location>
        <position position="294"/>
    </location>
</feature>
<feature type="modified residue" description="Phosphoserine; by MAPK" evidence="10 24 34">
    <location>
        <position position="345"/>
    </location>
</feature>
<feature type="modified residue" description="Phosphoserine; by CDK2" evidence="16 24 35">
    <location>
        <position position="400"/>
    </location>
</feature>
<feature type="modified residue" description="Phosphoserine" evidence="10">
    <location>
        <position position="676"/>
    </location>
</feature>
<feature type="cross-link" description="Glycyl lysine isopeptide (Lys-Gly) (interchain with G-Cter in SUMO)" evidence="20">
    <location>
        <position position="7"/>
    </location>
</feature>
<feature type="cross-link" description="Glycyl lysine isopeptide (Lys-Gly) (interchain with G-Cter in SUMO); alternate">
    <location>
        <position position="388"/>
    </location>
</feature>
<feature type="cross-link" description="Glycyl lysine isopeptide (Lys-Gly) (interchain with G-Cter in ubiquitin); alternate" evidence="22">
    <location>
        <position position="388"/>
    </location>
</feature>
<feature type="cross-link" description="Glycyl lysine isopeptide (Lys-Gly) (interchain with G-Cter in SUMO)" evidence="20">
    <location>
        <position position="531"/>
    </location>
</feature>
<feature type="splice variant" id="VSP_046942" description="In isoform 3." evidence="41">
    <location>
        <begin position="1"/>
        <end position="594"/>
    </location>
</feature>
<feature type="splice variant" id="VSP_003706" description="In isoform A." evidence="43">
    <location>
        <begin position="1"/>
        <end position="164"/>
    </location>
</feature>
<feature type="splice variant" id="VSP_047454" description="In isoform 4." evidence="40">
    <original>MTELKAKGPRAPHVAG</original>
    <variation>MEFIYIYMNFFFFFSV</variation>
    <location>
        <begin position="1"/>
        <end position="16"/>
    </location>
</feature>
<feature type="splice variant" id="VSP_047455" description="In isoform 4." evidence="40">
    <location>
        <begin position="17"/>
        <end position="635"/>
    </location>
</feature>
<feature type="splice variant" id="VSP_053543" description="In isoform 5." evidence="42">
    <location>
        <begin position="636"/>
        <end position="737"/>
    </location>
</feature>
<feature type="sequence variant" id="VAR_019221" description="In dbSNP:rs11571143." evidence="39">
    <original>A</original>
    <variation>T</variation>
    <location>
        <position position="50"/>
    </location>
</feature>
<feature type="sequence variant" id="VAR_019222" description="In dbSNP:rs11571144." evidence="39">
    <original>A</original>
    <variation>V</variation>
    <location>
        <position position="120"/>
    </location>
</feature>
<feature type="sequence variant" id="VAR_019223" description="In dbSNP:rs11571145." evidence="39">
    <original>P</original>
    <variation>L</variation>
    <location>
        <position position="186"/>
    </location>
</feature>
<feature type="sequence variant" id="VAR_019224" description="In dbSNP:rs11571146." evidence="39">
    <original>M</original>
    <variation>R</variation>
    <location>
        <position position="301"/>
    </location>
</feature>
<feature type="sequence variant" id="VAR_016117" description="In dbSNP:rs3740753." evidence="26 39">
    <original>S</original>
    <variation>T</variation>
    <location>
        <position position="344"/>
    </location>
</feature>
<feature type="sequence variant" id="VAR_025555" description="In dbSNP:rs11571147.">
    <original>C</original>
    <variation>S</variation>
    <location>
        <position position="347"/>
    </location>
</feature>
<feature type="sequence variant" id="VAR_019225" description="In dbSNP:rs11571150." evidence="39">
    <original>A</original>
    <variation>S</variation>
    <location>
        <position position="444"/>
    </location>
</feature>
<feature type="sequence variant" id="VAR_019226" description="In dbSNP:rs11571151." evidence="39">
    <original>V</original>
    <variation>L</variation>
    <location>
        <position position="529"/>
    </location>
</feature>
<feature type="sequence variant" id="VAR_019227" description="In dbSNP:rs11571152." evidence="39">
    <original>Q</original>
    <variation>P</variation>
    <location>
        <position position="536"/>
    </location>
</feature>
<feature type="sequence variant" id="VAR_014627" description="In dbSNP:rs2020874.">
    <original>R</original>
    <variation>I</variation>
    <location>
        <position position="625"/>
    </location>
</feature>
<feature type="sequence variant" id="VAR_019228" description="In dbSNP:rs11571222." evidence="39">
    <original>L</original>
    <variation>V</variation>
    <location>
        <position position="651"/>
    </location>
</feature>
<feature type="sequence variant" id="VAR_016118" description="In dbSNP:rs1042838." evidence="13 28 38">
    <original>V</original>
    <variation>L</variation>
    <location>
        <position position="660"/>
    </location>
</feature>
<feature type="sequence variant" id="VAR_014628" description="In dbSNP:rs2020880." evidence="39">
    <original>S</original>
    <variation>L</variation>
    <location>
        <position position="865"/>
    </location>
</feature>
<feature type="mutagenesis site" description="Some loss of sumoylation; when associated with R-531. Complete loss of sumoylation; when associated with R-388 and R-531." evidence="20">
    <original>K</original>
    <variation>R</variation>
    <location>
        <position position="7"/>
    </location>
</feature>
<feature type="mutagenesis site" description="Reduces transcriptional activation; when associated with A-58 and A-59." evidence="11">
    <original>L</original>
    <variation>A</variation>
    <location>
        <position position="55"/>
    </location>
</feature>
<feature type="mutagenesis site" description="Reduces transcriptional activation; when associated with A-55 and A-59." evidence="11">
    <original>L</original>
    <variation>A</variation>
    <location>
        <position position="58"/>
    </location>
</feature>
<feature type="mutagenesis site" description="Reduces transcriptional activation; when associated with A-55 and A-58." evidence="11">
    <original>L</original>
    <variation>A</variation>
    <location>
        <position position="59"/>
    </location>
</feature>
<feature type="mutagenesis site" description="Reduces transcriptional activation; when associated with A-118 and A-119." evidence="11">
    <original>L</original>
    <variation>A</variation>
    <location>
        <position position="115"/>
    </location>
</feature>
<feature type="mutagenesis site" description="Reduces transcriptional activation; when associated with A-115 and A-119." evidence="11">
    <original>L</original>
    <variation>A</variation>
    <location>
        <position position="118"/>
    </location>
</feature>
<feature type="mutagenesis site" description="Reduces transcriptional activation; when associated with A-115 and A-118." evidence="11">
    <original>L</original>
    <variation>A</variation>
    <location>
        <position position="119"/>
    </location>
</feature>
<feature type="mutagenesis site" description="Reduces transcriptional activation." evidence="11">
    <original>W</original>
    <variation>A</variation>
    <variation>F</variation>
    <variation>R</variation>
    <location>
        <position position="140"/>
    </location>
</feature>
<feature type="mutagenesis site" description="No effect on interaction with CUEDC2. Impaired progesterone-induced transcriptional activity. No CUEDC2- nor progestin-mediated protein degradation. No change in sumoylation; when associated with A-344 and A-345." evidence="7 21 23">
    <original>S</original>
    <variation>A</variation>
    <location>
        <position position="294"/>
    </location>
</feature>
<feature type="mutagenesis site" description="Decreases protein stability and increases progesterone-induced transcriptional activity." evidence="7 21 23">
    <original>S</original>
    <variation>D</variation>
    <location>
        <position position="294"/>
    </location>
</feature>
<feature type="mutagenesis site" description="No interaction with SP1. No change in progestin-induced protein degradation; when associated with A-345. No change in sumoylation; when associated with A-294 and A-345." evidence="7 24">
    <original>S</original>
    <variation>A</variation>
    <location>
        <position position="344"/>
    </location>
</feature>
<feature type="mutagenesis site" description="No change in progestin-induced protein degradation; when associated with A-344. No change in sumoylation; when associated with A-294 and A-344." evidence="7 24">
    <original>S</original>
    <variation>A</variation>
    <location>
        <position position="345"/>
    </location>
</feature>
<feature type="mutagenesis site" description="Great loss of sumoylation; when associated with R-7. Completely abolishes sumoylation; when associated with R-7 and R-531. Loss of CUEDC2-mediated protein degradation. Increased ligand-dependent transcriptional activity." evidence="20 22 23">
    <original>K</original>
    <variation>R</variation>
    <location>
        <position position="388"/>
    </location>
</feature>
<feature type="mutagenesis site" description="Abolishes CDK2-induced activity in the absence, but not in the presence, of progestin. Delayed nuclear translocation in presence of progestin." evidence="16 24">
    <original>S</original>
    <variation>A</variation>
    <location>
        <position position="400"/>
    </location>
</feature>
<feature type="mutagenesis site" description="Some loss of sumoylation; when associated with R-7. Completely abolishes sumoylation; when associated with R-7 and R-388." evidence="20">
    <original>K</original>
    <variation>R</variation>
    <location>
        <position position="531"/>
    </location>
</feature>
<feature type="sequence conflict" description="In Ref. 1; CAA36018." evidence="43" ref="1">
    <original>G</original>
    <variation>S</variation>
    <location>
        <position position="226"/>
    </location>
</feature>
<feature type="sequence conflict" description="In Ref. 1; CAA36018." evidence="43" ref="1">
    <original>V</original>
    <variation>S</variation>
    <location>
        <position position="256"/>
    </location>
</feature>
<feature type="turn" evidence="48">
    <location>
        <begin position="568"/>
        <end position="570"/>
    </location>
</feature>
<feature type="strand" evidence="48">
    <location>
        <begin position="576"/>
        <end position="578"/>
    </location>
</feature>
<feature type="strand" evidence="48">
    <location>
        <begin position="581"/>
        <end position="583"/>
    </location>
</feature>
<feature type="helix" evidence="48">
    <location>
        <begin position="585"/>
        <end position="596"/>
    </location>
</feature>
<feature type="strand" evidence="48">
    <location>
        <begin position="604"/>
        <end position="607"/>
    </location>
</feature>
<feature type="turn" evidence="48">
    <location>
        <begin position="613"/>
        <end position="618"/>
    </location>
</feature>
<feature type="helix" evidence="48">
    <location>
        <begin position="620"/>
        <end position="629"/>
    </location>
</feature>
<feature type="helix" evidence="47">
    <location>
        <begin position="686"/>
        <end position="694"/>
    </location>
</feature>
<feature type="helix" evidence="47">
    <location>
        <begin position="711"/>
        <end position="735"/>
    </location>
</feature>
<feature type="helix" evidence="47">
    <location>
        <begin position="739"/>
        <end position="741"/>
    </location>
</feature>
<feature type="helix" evidence="47">
    <location>
        <begin position="744"/>
        <end position="771"/>
    </location>
</feature>
<feature type="strand" evidence="47">
    <location>
        <begin position="774"/>
        <end position="779"/>
    </location>
</feature>
<feature type="strand" evidence="47">
    <location>
        <begin position="782"/>
        <end position="784"/>
    </location>
</feature>
<feature type="helix" evidence="47">
    <location>
        <begin position="786"/>
        <end position="788"/>
    </location>
</feature>
<feature type="helix" evidence="47">
    <location>
        <begin position="792"/>
        <end position="811"/>
    </location>
</feature>
<feature type="helix" evidence="47">
    <location>
        <begin position="815"/>
        <end position="826"/>
    </location>
</feature>
<feature type="strand" evidence="47">
    <location>
        <begin position="828"/>
        <end position="830"/>
    </location>
</feature>
<feature type="helix" evidence="47">
    <location>
        <begin position="838"/>
        <end position="857"/>
    </location>
</feature>
<feature type="helix" evidence="47">
    <location>
        <begin position="863"/>
        <end position="896"/>
    </location>
</feature>
<feature type="helix" evidence="47">
    <location>
        <begin position="898"/>
        <end position="901"/>
    </location>
</feature>
<feature type="helix" evidence="47">
    <location>
        <begin position="907"/>
        <end position="921"/>
    </location>
</feature>
<feature type="strand" evidence="47">
    <location>
        <begin position="925"/>
        <end position="927"/>
    </location>
</feature>
<gene>
    <name type="primary">PGR</name>
    <name type="synonym">NR3C3</name>
</gene>
<reference key="1">
    <citation type="journal article" date="1990" name="EMBO J.">
        <title>Two distinct estrogen-regulated promoters generate transcripts encoding the two functionally different human progesterone receptor forms A and B.</title>
        <authorList>
            <person name="Kastner P."/>
            <person name="Krust A."/>
            <person name="Turcotte B."/>
            <person name="Stropp U."/>
            <person name="Tora L."/>
            <person name="Gronemeyer H."/>
            <person name="Chambon P."/>
        </authorList>
    </citation>
    <scope>NUCLEOTIDE SEQUENCE [MRNA]</scope>
    <scope>ALTERNATIVE PROMOTER USAGE</scope>
    <scope>VARIANT THR-344</scope>
</reference>
<reference key="2">
    <citation type="journal article" date="1987" name="Biochem. Biophys. Res. Commun.">
        <title>Complete amino acid sequence of the human progesterone receptor deduced from cloned cDNA.</title>
        <authorList>
            <person name="Misrahi M."/>
            <person name="Atger M."/>
            <person name="D'Auriol L."/>
            <person name="Loosfelt H."/>
            <person name="Meriel C."/>
            <person name="Fridlansky F."/>
            <person name="Guiochon-Mantel A."/>
            <person name="Galibert F."/>
            <person name="Milgrom E."/>
        </authorList>
    </citation>
    <scope>NUCLEOTIDE SEQUENCE [MRNA]</scope>
    <scope>VARIANT LEU-660</scope>
</reference>
<reference key="3">
    <citation type="submission" date="1997-07" db="EMBL/GenBank/DDBJ databases">
        <authorList>
            <person name="Kieback D.G."/>
            <person name="Agoulnik I.U."/>
            <person name="Tong X.-W."/>
        </authorList>
    </citation>
    <scope>NUCLEOTIDE SEQUENCE [MRNA]</scope>
    <scope>VARIANT LEU-660</scope>
</reference>
<reference key="4">
    <citation type="submission" date="2002-04" db="EMBL/GenBank/DDBJ databases">
        <title>Progesterone Receptor, alternative splicing variant, mRNA.</title>
        <authorList>
            <person name="Hisatomi H."/>
            <person name="Wakita K."/>
            <person name="Kohno N."/>
            <person name="Nagao K."/>
            <person name="Hirata H."/>
            <person name="Hikiji K."/>
        </authorList>
    </citation>
    <scope>NUCLEOTIDE SEQUENCE [MRNA] (ISOFORM 5)</scope>
    <source>
        <tissue>Mammary tumor</tissue>
    </source>
</reference>
<reference key="5">
    <citation type="journal article" date="2008" name="Mol. Phylogenet. Evol.">
        <title>The human progesterone receptor shows evidence of adaptive evolution associated with its ability to act as a transcription factor.</title>
        <authorList>
            <person name="Chen C."/>
            <person name="Opazo J.C."/>
            <person name="Erez O."/>
            <person name="Uddin M."/>
            <person name="Santolaya-Forgas J."/>
            <person name="Goodman M."/>
            <person name="Grossman L.I."/>
            <person name="Romero R."/>
            <person name="Wildman D.E."/>
        </authorList>
    </citation>
    <scope>NUCLEOTIDE SEQUENCE [GENOMIC DNA]</scope>
</reference>
<reference key="6">
    <citation type="journal article" date="2003" name="Mol. Cell. Endocrinol.">
        <title>Cloning and expression of a novel, truncated, progesterone receptor.</title>
        <authorList>
            <person name="Saner K.J."/>
            <person name="Welter B.H."/>
            <person name="Zhang F."/>
            <person name="Hansen E."/>
            <person name="Dupont B."/>
            <person name="Wei Y."/>
            <person name="Price T.M."/>
        </authorList>
    </citation>
    <scope>NUCLEOTIDE SEQUENCE [MRNA] (ISOFORM 4)</scope>
    <scope>ALTERNATIVE PROMOTER USAGE</scope>
    <scope>VARIANT LEU-660</scope>
    <source>
        <tissue>Adipose tissue</tissue>
        <tissue>Aorta</tissue>
    </source>
</reference>
<reference key="7">
    <citation type="journal article" date="2004" name="Nat. Genet.">
        <title>Complete sequencing and characterization of 21,243 full-length human cDNAs.</title>
        <authorList>
            <person name="Ota T."/>
            <person name="Suzuki Y."/>
            <person name="Nishikawa T."/>
            <person name="Otsuki T."/>
            <person name="Sugiyama T."/>
            <person name="Irie R."/>
            <person name="Wakamatsu A."/>
            <person name="Hayashi K."/>
            <person name="Sato H."/>
            <person name="Nagai K."/>
            <person name="Kimura K."/>
            <person name="Makita H."/>
            <person name="Sekine M."/>
            <person name="Obayashi M."/>
            <person name="Nishi T."/>
            <person name="Shibahara T."/>
            <person name="Tanaka T."/>
            <person name="Ishii S."/>
            <person name="Yamamoto J."/>
            <person name="Saito K."/>
            <person name="Kawai Y."/>
            <person name="Isono Y."/>
            <person name="Nakamura Y."/>
            <person name="Nagahari K."/>
            <person name="Murakami K."/>
            <person name="Yasuda T."/>
            <person name="Iwayanagi T."/>
            <person name="Wagatsuma M."/>
            <person name="Shiratori A."/>
            <person name="Sudo H."/>
            <person name="Hosoiri T."/>
            <person name="Kaku Y."/>
            <person name="Kodaira H."/>
            <person name="Kondo H."/>
            <person name="Sugawara M."/>
            <person name="Takahashi M."/>
            <person name="Kanda K."/>
            <person name="Yokoi T."/>
            <person name="Furuya T."/>
            <person name="Kikkawa E."/>
            <person name="Omura Y."/>
            <person name="Abe K."/>
            <person name="Kamihara K."/>
            <person name="Katsuta N."/>
            <person name="Sato K."/>
            <person name="Tanikawa M."/>
            <person name="Yamazaki M."/>
            <person name="Ninomiya K."/>
            <person name="Ishibashi T."/>
            <person name="Yamashita H."/>
            <person name="Murakawa K."/>
            <person name="Fujimori K."/>
            <person name="Tanai H."/>
            <person name="Kimata M."/>
            <person name="Watanabe M."/>
            <person name="Hiraoka S."/>
            <person name="Chiba Y."/>
            <person name="Ishida S."/>
            <person name="Ono Y."/>
            <person name="Takiguchi S."/>
            <person name="Watanabe S."/>
            <person name="Yosida M."/>
            <person name="Hotuta T."/>
            <person name="Kusano J."/>
            <person name="Kanehori K."/>
            <person name="Takahashi-Fujii A."/>
            <person name="Hara H."/>
            <person name="Tanase T.-O."/>
            <person name="Nomura Y."/>
            <person name="Togiya S."/>
            <person name="Komai F."/>
            <person name="Hara R."/>
            <person name="Takeuchi K."/>
            <person name="Arita M."/>
            <person name="Imose N."/>
            <person name="Musashino K."/>
            <person name="Yuuki H."/>
            <person name="Oshima A."/>
            <person name="Sasaki N."/>
            <person name="Aotsuka S."/>
            <person name="Yoshikawa Y."/>
            <person name="Matsunawa H."/>
            <person name="Ichihara T."/>
            <person name="Shiohata N."/>
            <person name="Sano S."/>
            <person name="Moriya S."/>
            <person name="Momiyama H."/>
            <person name="Satoh N."/>
            <person name="Takami S."/>
            <person name="Terashima Y."/>
            <person name="Suzuki O."/>
            <person name="Nakagawa S."/>
            <person name="Senoh A."/>
            <person name="Mizoguchi H."/>
            <person name="Goto Y."/>
            <person name="Shimizu F."/>
            <person name="Wakebe H."/>
            <person name="Hishigaki H."/>
            <person name="Watanabe T."/>
            <person name="Sugiyama A."/>
            <person name="Takemoto M."/>
            <person name="Kawakami B."/>
            <person name="Yamazaki M."/>
            <person name="Watanabe K."/>
            <person name="Kumagai A."/>
            <person name="Itakura S."/>
            <person name="Fukuzumi Y."/>
            <person name="Fujimori Y."/>
            <person name="Komiyama M."/>
            <person name="Tashiro H."/>
            <person name="Tanigami A."/>
            <person name="Fujiwara T."/>
            <person name="Ono T."/>
            <person name="Yamada K."/>
            <person name="Fujii Y."/>
            <person name="Ozaki K."/>
            <person name="Hirao M."/>
            <person name="Ohmori Y."/>
            <person name="Kawabata A."/>
            <person name="Hikiji T."/>
            <person name="Kobatake N."/>
            <person name="Inagaki H."/>
            <person name="Ikema Y."/>
            <person name="Okamoto S."/>
            <person name="Okitani R."/>
            <person name="Kawakami T."/>
            <person name="Noguchi S."/>
            <person name="Itoh T."/>
            <person name="Shigeta K."/>
            <person name="Senba T."/>
            <person name="Matsumura K."/>
            <person name="Nakajima Y."/>
            <person name="Mizuno T."/>
            <person name="Morinaga M."/>
            <person name="Sasaki M."/>
            <person name="Togashi T."/>
            <person name="Oyama M."/>
            <person name="Hata H."/>
            <person name="Watanabe M."/>
            <person name="Komatsu T."/>
            <person name="Mizushima-Sugano J."/>
            <person name="Satoh T."/>
            <person name="Shirai Y."/>
            <person name="Takahashi Y."/>
            <person name="Nakagawa K."/>
            <person name="Okumura K."/>
            <person name="Nagase T."/>
            <person name="Nomura N."/>
            <person name="Kikuchi H."/>
            <person name="Masuho Y."/>
            <person name="Yamashita R."/>
            <person name="Nakai K."/>
            <person name="Yada T."/>
            <person name="Nakamura Y."/>
            <person name="Ohara O."/>
            <person name="Isogai T."/>
            <person name="Sugano S."/>
        </authorList>
    </citation>
    <scope>NUCLEOTIDE SEQUENCE [LARGE SCALE MRNA] (ISOFORM 3)</scope>
    <source>
        <tissue>Uterus</tissue>
    </source>
</reference>
<reference key="8">
    <citation type="submission" date="2004-01" db="EMBL/GenBank/DDBJ databases">
        <authorList>
            <consortium name="NIEHS SNPs program"/>
        </authorList>
    </citation>
    <scope>NUCLEOTIDE SEQUENCE [GENOMIC DNA]</scope>
    <scope>VARIANTS THR-50; VAL-120; LEU-186; ARG-301; THR-344; SER-444; LEU-529; PRO-536; VAL-651 AND LEU-865</scope>
</reference>
<reference key="9">
    <citation type="journal article" date="2006" name="Nature">
        <title>Human chromosome 11 DNA sequence and analysis including novel gene identification.</title>
        <authorList>
            <person name="Taylor T.D."/>
            <person name="Noguchi H."/>
            <person name="Totoki Y."/>
            <person name="Toyoda A."/>
            <person name="Kuroki Y."/>
            <person name="Dewar K."/>
            <person name="Lloyd C."/>
            <person name="Itoh T."/>
            <person name="Takeda T."/>
            <person name="Kim D.-W."/>
            <person name="She X."/>
            <person name="Barlow K.F."/>
            <person name="Bloom T."/>
            <person name="Bruford E."/>
            <person name="Chang J.L."/>
            <person name="Cuomo C.A."/>
            <person name="Eichler E."/>
            <person name="FitzGerald M.G."/>
            <person name="Jaffe D.B."/>
            <person name="LaButti K."/>
            <person name="Nicol R."/>
            <person name="Park H.-S."/>
            <person name="Seaman C."/>
            <person name="Sougnez C."/>
            <person name="Yang X."/>
            <person name="Zimmer A.R."/>
            <person name="Zody M.C."/>
            <person name="Birren B.W."/>
            <person name="Nusbaum C."/>
            <person name="Fujiyama A."/>
            <person name="Hattori M."/>
            <person name="Rogers J."/>
            <person name="Lander E.S."/>
            <person name="Sakaki Y."/>
        </authorList>
    </citation>
    <scope>NUCLEOTIDE SEQUENCE [LARGE SCALE GENOMIC DNA]</scope>
</reference>
<reference key="10">
    <citation type="submission" date="2005-07" db="EMBL/GenBank/DDBJ databases">
        <authorList>
            <person name="Mural R.J."/>
            <person name="Istrail S."/>
            <person name="Sutton G.G."/>
            <person name="Florea L."/>
            <person name="Halpern A.L."/>
            <person name="Mobarry C.M."/>
            <person name="Lippert R."/>
            <person name="Walenz B."/>
            <person name="Shatkay H."/>
            <person name="Dew I."/>
            <person name="Miller J.R."/>
            <person name="Flanigan M.J."/>
            <person name="Edwards N.J."/>
            <person name="Bolanos R."/>
            <person name="Fasulo D."/>
            <person name="Halldorsson B.V."/>
            <person name="Hannenhalli S."/>
            <person name="Turner R."/>
            <person name="Yooseph S."/>
            <person name="Lu F."/>
            <person name="Nusskern D.R."/>
            <person name="Shue B.C."/>
            <person name="Zheng X.H."/>
            <person name="Zhong F."/>
            <person name="Delcher A.L."/>
            <person name="Huson D.H."/>
            <person name="Kravitz S.A."/>
            <person name="Mouchard L."/>
            <person name="Reinert K."/>
            <person name="Remington K.A."/>
            <person name="Clark A.G."/>
            <person name="Waterman M.S."/>
            <person name="Eichler E.E."/>
            <person name="Adams M.D."/>
            <person name="Hunkapiller M.W."/>
            <person name="Myers E.W."/>
            <person name="Venter J.C."/>
        </authorList>
    </citation>
    <scope>NUCLEOTIDE SEQUENCE [LARGE SCALE GENOMIC DNA]</scope>
</reference>
<reference key="11">
    <citation type="journal article" date="2001" name="J. Biol. Chem.">
        <title>Identification of a phosphorylation site in the hinge region of the human progesterone receptor and additional amino-terminal phosphorylation sites.</title>
        <authorList>
            <person name="Knotts T.A."/>
            <person name="Orkiszewski R.S."/>
            <person name="Cook R.G."/>
            <person name="Edwards D.P."/>
            <person name="Weigel N.L."/>
        </authorList>
    </citation>
    <scope>PROTEIN SEQUENCE OF 11-22 AND 673-679</scope>
    <scope>PHOSPHORYLATION AT SER-20; SER-102; SER-130; SER-162; SER-190; SER-213; SER-345 AND SER-676</scope>
    <scope>IDENTIFICATION BY MASS SPECTROMETRY</scope>
</reference>
<reference key="12">
    <citation type="journal article" date="2013" name="Mol. Endocrinol.">
        <title>A truncated progesterone receptor (PR-M) localizes to the mitochondrion and controls cellular respiration.</title>
        <authorList>
            <person name="Dai Q."/>
            <person name="Shah A.A."/>
            <person name="Garde R.V."/>
            <person name="Yonish B.A."/>
            <person name="Zhang L."/>
            <person name="Medvitz N.A."/>
            <person name="Miller S.E."/>
            <person name="Hansen E.L."/>
            <person name="Dunn C.N."/>
            <person name="Price T.M."/>
        </authorList>
    </citation>
    <scope>PROTEIN SEQUENCE OF 204-217</scope>
    <scope>FUNCTION (ISOFORM 4)</scope>
    <scope>SUBCELLULAR LOCATION (ISOFORM 4)</scope>
    <source>
        <tissue>Heart</tissue>
    </source>
</reference>
<reference key="13">
    <citation type="journal article" date="1992" name="J. Biol. Chem.">
        <title>A limiting factor mediates the differential activation of promoters by the human progesterone receptor isoforms.</title>
        <authorList>
            <person name="Meyer M.E."/>
            <person name="Quirin-Stricker C."/>
            <person name="Lerouge T."/>
            <person name="Bocquel M.T."/>
            <person name="Gronemeyer H."/>
        </authorList>
    </citation>
    <scope>FUNCTION</scope>
</reference>
<reference key="14">
    <citation type="journal article" date="1992" name="J. Biol. Chem.">
        <title>Members of the steroid hormone receptor superfamily interact with TFIIB (S300-II).</title>
        <authorList>
            <person name="Ing N.H."/>
            <person name="Beekman J.M."/>
            <person name="Tsai S.Y."/>
            <person name="Tsai M.J."/>
            <person name="O'Malley B.W."/>
        </authorList>
    </citation>
    <scope>INTERACTION WITH GTF2B</scope>
</reference>
<reference key="15">
    <citation type="journal article" date="1993" name="Mol. Endocrinol.">
        <title>Human progesterone receptor A form is a cell- and promoter-specific repressor of human progesterone receptor B function.</title>
        <authorList>
            <person name="Vegeto E."/>
            <person name="Shahbaz M.M."/>
            <person name="Wen D.X."/>
            <person name="Goldman M.E."/>
            <person name="O'Malley B.W."/>
            <person name="McDonnell D.P."/>
        </authorList>
    </citation>
    <scope>FUNCTION (ISOFORM A)</scope>
</reference>
<reference key="16">
    <citation type="journal article" date="1994" name="J. Steroid Biochem. Mol. Biol.">
        <title>The human progesterone receptor A-form functions as a transcriptional modulator of mineralocorticoid receptor transcriptional activity.</title>
        <authorList>
            <person name="McDonnell D.P."/>
            <person name="Shahbaz M.M."/>
            <person name="Vegeto E."/>
            <person name="Goldman M.E."/>
        </authorList>
    </citation>
    <scope>FUNCTION (ISOFORM A)</scope>
</reference>
<reference key="17">
    <citation type="journal article" date="1994" name="Mol. Cell. Biol.">
        <title>The A and B isoforms of the human progesterone receptor operate through distinct signaling pathways within target cells.</title>
        <authorList>
            <person name="Wen D.X."/>
            <person name="Xu Y.F."/>
            <person name="Mais D.E."/>
            <person name="Goldman M.E."/>
            <person name="McDonnell D.P."/>
        </authorList>
    </citation>
    <scope>FUNCTION</scope>
</reference>
<reference key="18">
    <citation type="journal article" date="1995" name="Mol. Endocrinol.">
        <title>Identification of a group of Ser-Pro motif hormone-inducible phosphorylation sites in the human progesterone receptor.</title>
        <authorList>
            <person name="Zhang Y."/>
            <person name="Beck C.A."/>
            <person name="Poletti A."/>
            <person name="Edwards D.P."/>
            <person name="Weigel N.L."/>
        </authorList>
    </citation>
    <scope>PHOSPHORYLATION AT SER-81 AND SER-162</scope>
</reference>
<reference key="19">
    <citation type="journal article" date="1996" name="J. Biol. Chem.">
        <title>Stoichiometry and site-specific phosphorylation of human progesterone receptor in native target cells and in the baculovirus expression system.</title>
        <authorList>
            <person name="Beck C.A."/>
            <person name="Zhang Y."/>
            <person name="Altmann M."/>
            <person name="Weigel N.L."/>
            <person name="Edwards D.P."/>
        </authorList>
    </citation>
    <scope>PHOSPHORYLATION AT SER-81; SER-102; SER-162; SER-294 AND SER-345</scope>
</reference>
<reference key="20">
    <citation type="journal article" date="1997" name="J. Biol. Chem.">
        <title>Mapping and characterization of the functional domains responsible for the differential activity of the A and B isoforms of the human progesterone receptor.</title>
        <authorList>
            <person name="Giangrande P.H."/>
            <person name="Pollio G."/>
            <person name="McDonnell D.P."/>
        </authorList>
    </citation>
    <scope>FUNCTION</scope>
</reference>
<reference key="21">
    <citation type="journal article" date="1997" name="Mol. Endocrinol.">
        <title>Phosphorylation of human progesterone receptor by cyclin-dependent kinase 2 on three sites that are authentic basal phosphorylation sites in vivo.</title>
        <authorList>
            <person name="Zhang Y."/>
            <person name="Beck C.A."/>
            <person name="Poletti A."/>
            <person name="Clement J.P. IV"/>
            <person name="Prendergast P."/>
            <person name="Yip T.-T."/>
            <person name="Hutchens T.W."/>
            <person name="Edwards D.P."/>
            <person name="Weigel N.L."/>
        </authorList>
    </citation>
    <scope>PHOSPHORYLATION AT SER-162; SER-190 AND SER-400</scope>
</reference>
<reference key="22">
    <citation type="journal article" date="2000" name="Hum. Reprod.">
        <title>Heterogeneity of progesterone receptors A and B expression in human endometrial glands and stroma.</title>
        <authorList>
            <person name="Mote P.A."/>
            <person name="Balleine R.L."/>
            <person name="McGowan E.M."/>
            <person name="Clarke C.L."/>
        </authorList>
    </citation>
    <scope>TISSUE SPECIFICITY</scope>
</reference>
<reference key="23">
    <citation type="journal article" date="2000" name="Mol. Cell. Biol.">
        <title>The opposing transcriptional activities of the two isoforms of the human progesterone receptor are due to differential cofactor binding.</title>
        <authorList>
            <person name="Giangrande P.H."/>
            <person name="Kimbrel E.A."/>
            <person name="Edwards D.P."/>
            <person name="McDonnell D.P."/>
        </authorList>
    </citation>
    <scope>FUNCTION</scope>
    <scope>INTERACTION WITH NCOR2; NCOA2 AND NCOA1</scope>
</reference>
<reference key="24">
    <citation type="journal article" date="2000" name="Mol. Endocrinol.">
        <title>Differential hormone-dependent phosphorylation of progesterone receptor A and B forms revealed by a phosphoserine site-specific monoclonal antibody.</title>
        <authorList>
            <person name="Clemm D.L."/>
            <person name="Sherman L."/>
            <person name="Boonyaratanakornkit V."/>
            <person name="Schrader W.T."/>
            <person name="Weigel N.L."/>
            <person name="Edwards D.P."/>
        </authorList>
    </citation>
    <scope>PHOSPHORYLATION AT SER-190 AND SER-294</scope>
</reference>
<reference key="25">
    <citation type="journal article" date="2000" name="Proc. Natl. Acad. Sci. U.S.A.">
        <title>Phosphorylation of human progesterone receptors at serine-294 by mitogen-activated protein kinase signals their degradation by the 26S proteasome.</title>
        <authorList>
            <person name="Lange C.A."/>
            <person name="Shen T."/>
            <person name="Horwitz K.B."/>
        </authorList>
    </citation>
    <scope>PHOSPHORYLATION AT SER-294</scope>
    <scope>UBIQUITINATION</scope>
    <scope>MUTAGENESIS OF SER-294; SER-344 AND SER-345</scope>
</reference>
<reference key="26">
    <citation type="journal article" date="2001" name="J. Biol. Chem.">
        <title>Mapping the unique activation function 3 in the progesterone B-receptor upstream segment. Two LXXLL motifs and a tryptophan residue are required for activity.</title>
        <authorList>
            <person name="Tung L."/>
            <person name="Shen T."/>
            <person name="Abel M.G."/>
            <person name="Powell R.L."/>
            <person name="Takimoto G.S."/>
            <person name="Sartorius C.A."/>
            <person name="Horwitz K.B."/>
        </authorList>
    </citation>
    <scope>FUNCTION</scope>
    <scope>MUTAGENESIS OF LEU-55; LEU-58; LEU-59; LEU-115; LEU-118; LEU-119 AND TRP-140</scope>
</reference>
<reference key="27">
    <citation type="journal article" date="2002" name="J. Biol. Chem.">
        <title>Identification of protein arginine methyltransferase 2 as a coactivator for estrogen receptor alpha.</title>
        <authorList>
            <person name="Qi C."/>
            <person name="Chang J."/>
            <person name="Zhu Y."/>
            <person name="Yeldandi A.V."/>
            <person name="Rao S.M."/>
            <person name="Zhu Y.-J."/>
        </authorList>
    </citation>
    <scope>INTERACTION WITH PRMT2</scope>
</reference>
<reference key="28">
    <citation type="journal article" date="2003" name="Mol. Cell. Biol.">
        <title>BAF60a mediates critical interactions between nuclear receptors and the BRG1 chromatin-remodeling complex for transactivation.</title>
        <authorList>
            <person name="Hsiao P.W."/>
            <person name="Fryer C.J."/>
            <person name="Trotter K.W."/>
            <person name="Wang W."/>
            <person name="Archer T.K."/>
        </authorList>
    </citation>
    <scope>INTERACTION WITH SMARD1</scope>
</reference>
<reference key="29">
    <citation type="journal article" date="2004" name="Mol. Cell. Biol.">
        <title>Phosphorylation of progesterone receptor serine 400 mediates ligand-independent transcriptional activity in response to activation of cyclin-dependent protein kinase 2.</title>
        <authorList>
            <person name="Pierson-Mullany L.K."/>
            <person name="Lange C.A."/>
        </authorList>
    </citation>
    <scope>PHOSPHORYLATION AT SER-400</scope>
    <scope>FUNCTION</scope>
    <scope>SUBCELLULAR LOCATION</scope>
    <scope>MUTAGENESIS OF SER-400</scope>
</reference>
<reference key="30">
    <citation type="journal article" date="2005" name="Mol. Cell. Biol.">
        <title>Human progesterone receptor displays cell cycle-dependent changes in transcriptional activity.</title>
        <authorList>
            <person name="Narayanan R."/>
            <person name="Edwards D.P."/>
            <person name="Weigel N.L."/>
        </authorList>
    </citation>
    <scope>PHOSPHORYLATION AT SER-162; SER-190 AND SER-294</scope>
    <scope>SUBCELLULAR LOCATION</scope>
    <scope>FUNCTION</scope>
</reference>
<reference key="31">
    <citation type="journal article" date="2006" name="Mol. Cell. Biol.">
        <title>GCUNC-45 is a novel regulator for the progesterone receptor/hsp90 chaperoning pathway.</title>
        <authorList>
            <person name="Chadli A."/>
            <person name="Graham J.D."/>
            <person name="Abel M.G."/>
            <person name="Jackson T.A."/>
            <person name="Gordon D.F."/>
            <person name="Wood W.M."/>
            <person name="Felts S.J."/>
            <person name="Horwitz K.B."/>
            <person name="Toft D."/>
        </authorList>
    </citation>
    <scope>INTERACTION WITH UNC45A</scope>
</reference>
<reference key="32">
    <citation type="journal article" date="2006" name="Nucleic Acids Res.">
        <title>PIAS3 induction of PRB sumoylation represses PRB transactivation by destabilizing its retention in the nucleus.</title>
        <authorList>
            <person name="Man J.-H."/>
            <person name="Li H.-Y."/>
            <person name="Zhang P.-J."/>
            <person name="Zhou T."/>
            <person name="He K."/>
            <person name="Pan X."/>
            <person name="Liang B."/>
            <person name="Li A.-L."/>
            <person name="Zhao J."/>
            <person name="Gong W.-L."/>
            <person name="Jin B.-F."/>
            <person name="Xia Q."/>
            <person name="Yu M."/>
            <person name="Shen B.-F."/>
            <person name="Zhang X.-M."/>
        </authorList>
    </citation>
    <scope>SUMOYLATION AT LYS-7; LYS-388 AND LYS-531</scope>
    <scope>INTERACTION WITH PIAS3</scope>
    <scope>FUNCTION</scope>
    <scope>MUTAGENESIS OF LYS-7; LYS-388 AND LYS-531</scope>
</reference>
<reference key="33">
    <citation type="journal article" date="2007" name="EMBO J.">
        <title>CUE domain containing 2 regulates degradation of progesterone receptor by ubiquitin-proteasome.</title>
        <authorList>
            <person name="Zhang P.-J."/>
            <person name="Zhao J."/>
            <person name="Li H.-Y."/>
            <person name="Man J.-H."/>
            <person name="He K."/>
            <person name="Zhou T."/>
            <person name="Pan X."/>
            <person name="Li A.-L."/>
            <person name="Gong W.-L."/>
            <person name="Jin B.-F."/>
            <person name="Xia Q."/>
            <person name="Yu M."/>
            <person name="Shen B.-F."/>
            <person name="Zhang X.-M."/>
        </authorList>
    </citation>
    <scope>INTERACTION WITH CUEDC2</scope>
    <scope>SUMOYLATION AT LYS-388</scope>
    <scope>UBIQUITINATION AT LYS-388</scope>
    <scope>FUNCTION</scope>
    <scope>MUTAGENESIS OF LYS-388</scope>
</reference>
<reference key="34">
    <citation type="journal article" date="2007" name="Mol. Endocrinol.">
        <title>Phosphorylation-dependent antagonism of sumoylation derepresses progesterone receptor action in breast cancer cells.</title>
        <authorList>
            <person name="Daniel A.R."/>
            <person name="Faivre E.J."/>
            <person name="Lange C.A."/>
        </authorList>
    </citation>
    <scope>PHOSPHORYLATION AT SER-294</scope>
    <scope>SUMOYLATION AT LYS-388</scope>
    <scope>FUNCTION</scope>
    <scope>MUTAGENESIS OF SER-294 AND LYS-388</scope>
</reference>
<reference key="35">
    <citation type="journal article" date="2007" name="Steroids">
        <title>Linkage of progestin and epidermal growth factor signaling: phosphorylation of progesterone receptors mediates transcriptional hypersensitivity and increased ligand-independent breast cancer cell growth.</title>
        <authorList>
            <person name="Daniel A.R."/>
            <person name="Qiu M."/>
            <person name="Faivre E.J."/>
            <person name="Ostrander J.H."/>
            <person name="Skildum A."/>
            <person name="Lange C.A."/>
        </authorList>
    </citation>
    <scope>PHOSPHORYLATION AT SER-294</scope>
    <scope>FUNCTION</scope>
    <scope>SUBCELLULAR LOCATION</scope>
    <scope>MUTAGENESIS OF SER-294</scope>
</reference>
<reference key="36">
    <citation type="journal article" date="2008" name="Mol. Endocrinol.">
        <title>Progesterone receptor rapid signaling mediates serine 345 phosphorylation and tethering to specificity protein 1 transcription factors.</title>
        <authorList>
            <person name="Faivre E.J."/>
            <person name="Daniel A.R."/>
            <person name="Hillard C.J."/>
            <person name="Lange C.A."/>
        </authorList>
    </citation>
    <scope>PHOSPHORYLATION AT SER-294; SER-345 AND SER-400</scope>
    <scope>INTERACTION WITH SP1</scope>
    <scope>FUNCTION</scope>
    <scope>MUTAGENESIS OF SER-344; SER-345 AND SER-400</scope>
</reference>
<reference key="37">
    <citation type="journal article" date="2012" name="Mol. Biol. Cell">
        <title>DHHC-7 and -21 are palmitoylacyltransferases for sex steroid receptors.</title>
        <authorList>
            <person name="Pedram A."/>
            <person name="Razandi M."/>
            <person name="Deschenes R.J."/>
            <person name="Levin E.R."/>
        </authorList>
    </citation>
    <scope>PALMITOYLATION</scope>
</reference>
<reference key="38">
    <citation type="journal article" date="2013" name="J. Proteome Res.">
        <title>Toward a comprehensive characterization of a human cancer cell phosphoproteome.</title>
        <authorList>
            <person name="Zhou H."/>
            <person name="Di Palma S."/>
            <person name="Preisinger C."/>
            <person name="Peng M."/>
            <person name="Polat A.N."/>
            <person name="Heck A.J."/>
            <person name="Mohammed S."/>
        </authorList>
    </citation>
    <scope>PHOSPHORYLATION [LARGE SCALE ANALYSIS] AT SER-162</scope>
    <scope>IDENTIFICATION BY MASS SPECTROMETRY [LARGE SCALE ANALYSIS]</scope>
    <source>
        <tissue>Erythroleukemia</tissue>
    </source>
</reference>
<reference key="39">
    <citation type="journal article" date="2023" name="Mol. Cell">
        <title>UBR5 forms ligand-dependent complexes on chromatin to regulate nuclear hormone receptor stability.</title>
        <authorList>
            <person name="Tsai J.M."/>
            <person name="Aguirre J.D."/>
            <person name="Li Y.D."/>
            <person name="Brown J."/>
            <person name="Focht V."/>
            <person name="Kater L."/>
            <person name="Kempf G."/>
            <person name="Sandoval B."/>
            <person name="Schmitt S."/>
            <person name="Rutter J.C."/>
            <person name="Galli P."/>
            <person name="Sandate C.R."/>
            <person name="Cutler J.A."/>
            <person name="Zou C."/>
            <person name="Donovan K.A."/>
            <person name="Lumpkin R.J."/>
            <person name="Cavadini S."/>
            <person name="Park P.M.C."/>
            <person name="Sievers Q."/>
            <person name="Hatton C."/>
            <person name="Ener E."/>
            <person name="Regalado B.D."/>
            <person name="Sperling M.T."/>
            <person name="Slabicki M."/>
            <person name="Kim J."/>
            <person name="Zon R."/>
            <person name="Zhang Z."/>
            <person name="Miller P.G."/>
            <person name="Belizaire R."/>
            <person name="Sperling A.S."/>
            <person name="Fischer E.S."/>
            <person name="Irizarry R."/>
            <person name="Armstrong S.A."/>
            <person name="Thomae N.H."/>
            <person name="Ebert B.L."/>
        </authorList>
    </citation>
    <scope>FUNCTION</scope>
    <scope>UBIQUITINATION</scope>
</reference>
<reference key="40">
    <citation type="journal article" date="1998" name="Nature">
        <title>Atomic structure of progesterone complexed with its receptor.</title>
        <authorList>
            <person name="Williams S.P."/>
            <person name="Sigler P.B."/>
        </authorList>
    </citation>
    <scope>X-RAY CRYSTALLOGRAPHY (1.8 ANGSTROMS) OF 682-933 IN COMPLEX WITH PROGESTERONE</scope>
</reference>
<reference key="41">
    <citation type="journal article" date="2005" name="J. Biol. Chem.">
        <title>Molecular and pharmacological properties of a potent and selective novel nonsteroidal progesterone receptor agonist tanaproget.</title>
        <authorList>
            <person name="Zhang Z."/>
            <person name="Olland A.M."/>
            <person name="Zhu Y."/>
            <person name="Cohen J."/>
            <person name="Berrodin T."/>
            <person name="Chippari S."/>
            <person name="Appavu C."/>
            <person name="Li S."/>
            <person name="Wilhem J."/>
            <person name="Chopra R."/>
            <person name="Fensome A."/>
            <person name="Zhang P."/>
            <person name="Wrobel J."/>
            <person name="Unwalla R.J."/>
            <person name="Lyttle C.R."/>
            <person name="Winneker R.C."/>
        </authorList>
    </citation>
    <scope>X-RAY CRYSTALLOGRAPHY (2.0 ANGSTROMS) OF 676-933</scope>
</reference>
<proteinExistence type="evidence at protein level"/>
<protein>
    <recommendedName>
        <fullName>Progesterone receptor</fullName>
        <shortName>PR</shortName>
    </recommendedName>
    <alternativeName>
        <fullName>Nuclear receptor subfamily 3 group C member 3</fullName>
    </alternativeName>
</protein>
<name>PRGR_HUMAN</name>
<organism>
    <name type="scientific">Homo sapiens</name>
    <name type="common">Human</name>
    <dbReference type="NCBI Taxonomy" id="9606"/>
    <lineage>
        <taxon>Eukaryota</taxon>
        <taxon>Metazoa</taxon>
        <taxon>Chordata</taxon>
        <taxon>Craniata</taxon>
        <taxon>Vertebrata</taxon>
        <taxon>Euteleostomi</taxon>
        <taxon>Mammalia</taxon>
        <taxon>Eutheria</taxon>
        <taxon>Euarchontoglires</taxon>
        <taxon>Primates</taxon>
        <taxon>Haplorrhini</taxon>
        <taxon>Catarrhini</taxon>
        <taxon>Hominidae</taxon>
        <taxon>Homo</taxon>
    </lineage>
</organism>
<accession>P06401</accession>
<accession>A7LQ08</accession>
<accession>A7X8B0</accession>
<accession>B4E3T0</accession>
<accession>Q8TDS3</accession>
<accession>Q9UPF7</accession>
<keyword id="KW-0002">3D-structure</keyword>
<keyword id="KW-0877">Alternative promoter usage</keyword>
<keyword id="KW-0025">Alternative splicing</keyword>
<keyword id="KW-0963">Cytoplasm</keyword>
<keyword id="KW-0903">Direct protein sequencing</keyword>
<keyword id="KW-0238">DNA-binding</keyword>
<keyword id="KW-1017">Isopeptide bond</keyword>
<keyword id="KW-0446">Lipid-binding</keyword>
<keyword id="KW-0449">Lipoprotein</keyword>
<keyword id="KW-0472">Membrane</keyword>
<keyword id="KW-0479">Metal-binding</keyword>
<keyword id="KW-0496">Mitochondrion</keyword>
<keyword id="KW-1000">Mitochondrion outer membrane</keyword>
<keyword id="KW-0539">Nucleus</keyword>
<keyword id="KW-0564">Palmitate</keyword>
<keyword id="KW-0597">Phosphoprotein</keyword>
<keyword id="KW-1267">Proteomics identification</keyword>
<keyword id="KW-0675">Receptor</keyword>
<keyword id="KW-1185">Reference proteome</keyword>
<keyword id="KW-0754">Steroid-binding</keyword>
<keyword id="KW-0804">Transcription</keyword>
<keyword id="KW-0805">Transcription regulation</keyword>
<keyword id="KW-0832">Ubl conjugation</keyword>
<keyword id="KW-0862">Zinc</keyword>
<keyword id="KW-0863">Zinc-finger</keyword>
<dbReference type="EMBL" id="X51730">
    <property type="protein sequence ID" value="CAA36018.1"/>
    <property type="molecule type" value="mRNA"/>
</dbReference>
<dbReference type="EMBL" id="M15716">
    <property type="protein sequence ID" value="AAA60081.1"/>
    <property type="molecule type" value="mRNA"/>
</dbReference>
<dbReference type="EMBL" id="AF016381">
    <property type="protein sequence ID" value="AAD01587.1"/>
    <property type="molecule type" value="mRNA"/>
</dbReference>
<dbReference type="EMBL" id="AB084248">
    <property type="protein sequence ID" value="BAB91074.1"/>
    <property type="molecule type" value="mRNA"/>
</dbReference>
<dbReference type="EMBL" id="DQ234979">
    <property type="protein sequence ID" value="ABB72139.1"/>
    <property type="molecule type" value="Genomic_DNA"/>
</dbReference>
<dbReference type="EMBL" id="AY212933">
    <property type="protein sequence ID" value="AAO61671.1"/>
    <property type="molecule type" value="mRNA"/>
</dbReference>
<dbReference type="EMBL" id="AK304853">
    <property type="protein sequence ID" value="BAG65592.1"/>
    <property type="molecule type" value="mRNA"/>
</dbReference>
<dbReference type="EMBL" id="AY525610">
    <property type="protein sequence ID" value="AAS00096.1"/>
    <property type="molecule type" value="Genomic_DNA"/>
</dbReference>
<dbReference type="EMBL" id="AP001533">
    <property type="status" value="NOT_ANNOTATED_CDS"/>
    <property type="molecule type" value="Genomic_DNA"/>
</dbReference>
<dbReference type="EMBL" id="CH471065">
    <property type="protein sequence ID" value="EAW66999.1"/>
    <property type="molecule type" value="Genomic_DNA"/>
</dbReference>
<dbReference type="EMBL" id="CH471065">
    <property type="protein sequence ID" value="EAW67000.1"/>
    <property type="molecule type" value="Genomic_DNA"/>
</dbReference>
<dbReference type="CCDS" id="CCDS59229.1">
    <molecule id="P06401-3"/>
</dbReference>
<dbReference type="CCDS" id="CCDS8310.1">
    <molecule id="P06401-1"/>
</dbReference>
<dbReference type="PIR" id="S09971">
    <property type="entry name" value="QRHUP"/>
</dbReference>
<dbReference type="RefSeq" id="NP_000917.3">
    <molecule id="P06401-1"/>
    <property type="nucleotide sequence ID" value="NM_000926.4"/>
</dbReference>
<dbReference type="RefSeq" id="NP_001189403.1">
    <molecule id="P06401-2"/>
    <property type="nucleotide sequence ID" value="NM_001202474.3"/>
</dbReference>
<dbReference type="RefSeq" id="NP_001258090.1">
    <property type="nucleotide sequence ID" value="NM_001271161.2"/>
</dbReference>
<dbReference type="RefSeq" id="NP_001258091.1">
    <molecule id="P06401-3"/>
    <property type="nucleotide sequence ID" value="NM_001271162.2"/>
</dbReference>
<dbReference type="PDB" id="1A28">
    <property type="method" value="X-ray"/>
    <property type="resolution" value="1.80 A"/>
    <property type="chains" value="A/B=678-933"/>
</dbReference>
<dbReference type="PDB" id="1E3K">
    <property type="method" value="X-ray"/>
    <property type="resolution" value="2.80 A"/>
    <property type="chains" value="A/B=676-933"/>
</dbReference>
<dbReference type="PDB" id="1SQN">
    <property type="method" value="X-ray"/>
    <property type="resolution" value="1.45 A"/>
    <property type="chains" value="A/B=673-933"/>
</dbReference>
<dbReference type="PDB" id="1SR7">
    <property type="method" value="X-ray"/>
    <property type="resolution" value="1.46 A"/>
    <property type="chains" value="A/B=676-933"/>
</dbReference>
<dbReference type="PDB" id="1ZUC">
    <property type="method" value="X-ray"/>
    <property type="resolution" value="2.00 A"/>
    <property type="chains" value="A/B=676-933"/>
</dbReference>
<dbReference type="PDB" id="2C7A">
    <property type="method" value="X-ray"/>
    <property type="resolution" value="2.50 A"/>
    <property type="chains" value="A/B=563-640"/>
</dbReference>
<dbReference type="PDB" id="2OVH">
    <property type="method" value="X-ray"/>
    <property type="resolution" value="2.00 A"/>
    <property type="chains" value="A=678-933"/>
</dbReference>
<dbReference type="PDB" id="2OVM">
    <property type="method" value="X-ray"/>
    <property type="resolution" value="2.60 A"/>
    <property type="chains" value="A=678-933"/>
</dbReference>
<dbReference type="PDB" id="2W8Y">
    <property type="method" value="X-ray"/>
    <property type="resolution" value="1.80 A"/>
    <property type="chains" value="A/B=678-933"/>
</dbReference>
<dbReference type="PDB" id="3D90">
    <property type="method" value="X-ray"/>
    <property type="resolution" value="2.26 A"/>
    <property type="chains" value="A/B=676-933"/>
</dbReference>
<dbReference type="PDB" id="3G8O">
    <property type="method" value="X-ray"/>
    <property type="resolution" value="1.90 A"/>
    <property type="chains" value="A/B=673-933"/>
</dbReference>
<dbReference type="PDB" id="3HQ5">
    <property type="method" value="X-ray"/>
    <property type="resolution" value="2.10 A"/>
    <property type="chains" value="A/B=678-933"/>
</dbReference>
<dbReference type="PDB" id="3KBA">
    <property type="method" value="X-ray"/>
    <property type="resolution" value="2.00 A"/>
    <property type="chains" value="A/B=681-933"/>
</dbReference>
<dbReference type="PDB" id="3ZR7">
    <property type="method" value="X-ray"/>
    <property type="resolution" value="1.65 A"/>
    <property type="chains" value="A/B=678-933"/>
</dbReference>
<dbReference type="PDB" id="3ZRA">
    <property type="method" value="X-ray"/>
    <property type="resolution" value="1.90 A"/>
    <property type="chains" value="A/B=678-933"/>
</dbReference>
<dbReference type="PDB" id="3ZRB">
    <property type="method" value="X-ray"/>
    <property type="resolution" value="1.80 A"/>
    <property type="chains" value="A/B=678-933"/>
</dbReference>
<dbReference type="PDB" id="4A2J">
    <property type="method" value="X-ray"/>
    <property type="resolution" value="2.00 A"/>
    <property type="chains" value="A/B=678-933"/>
</dbReference>
<dbReference type="PDB" id="4APU">
    <property type="method" value="X-ray"/>
    <property type="resolution" value="1.90 A"/>
    <property type="chains" value="A/B=678-933"/>
</dbReference>
<dbReference type="PDB" id="4OAR">
    <property type="method" value="X-ray"/>
    <property type="resolution" value="2.41 A"/>
    <property type="chains" value="A=678-933"/>
</dbReference>
<dbReference type="PDB" id="5CC0">
    <property type="method" value="X-ray"/>
    <property type="resolution" value="2.40 A"/>
    <property type="chains" value="A/B=561-641"/>
</dbReference>
<dbReference type="PDBsum" id="1A28"/>
<dbReference type="PDBsum" id="1E3K"/>
<dbReference type="PDBsum" id="1SQN"/>
<dbReference type="PDBsum" id="1SR7"/>
<dbReference type="PDBsum" id="1ZUC"/>
<dbReference type="PDBsum" id="2C7A"/>
<dbReference type="PDBsum" id="2OVH"/>
<dbReference type="PDBsum" id="2OVM"/>
<dbReference type="PDBsum" id="2W8Y"/>
<dbReference type="PDBsum" id="3D90"/>
<dbReference type="PDBsum" id="3G8O"/>
<dbReference type="PDBsum" id="3HQ5"/>
<dbReference type="PDBsum" id="3KBA"/>
<dbReference type="PDBsum" id="3ZR7"/>
<dbReference type="PDBsum" id="3ZRA"/>
<dbReference type="PDBsum" id="3ZRB"/>
<dbReference type="PDBsum" id="4A2J"/>
<dbReference type="PDBsum" id="4APU"/>
<dbReference type="PDBsum" id="4OAR"/>
<dbReference type="PDBsum" id="5CC0"/>
<dbReference type="SMR" id="P06401"/>
<dbReference type="BioGRID" id="111260">
    <property type="interactions" value="76"/>
</dbReference>
<dbReference type="CORUM" id="P06401"/>
<dbReference type="DIP" id="DIP-5967N"/>
<dbReference type="ELM" id="P06401"/>
<dbReference type="FunCoup" id="P06401">
    <property type="interactions" value="976"/>
</dbReference>
<dbReference type="IntAct" id="P06401">
    <property type="interactions" value="89"/>
</dbReference>
<dbReference type="MINT" id="P06401"/>
<dbReference type="STRING" id="9606.ENSP00000325120"/>
<dbReference type="BindingDB" id="P06401"/>
<dbReference type="ChEMBL" id="CHEMBL208"/>
<dbReference type="DrugBank" id="DB01431">
    <property type="generic name" value="Allylestrenol"/>
</dbReference>
<dbReference type="DrugBank" id="DB06680">
    <property type="generic name" value="Asoprisnil"/>
</dbReference>
<dbReference type="DrugBank" id="DB01406">
    <property type="generic name" value="Danazol"/>
</dbReference>
<dbReference type="DrugBank" id="DB12941">
    <property type="generic name" value="Darolutamide"/>
</dbReference>
<dbReference type="DrugBank" id="DB13857">
    <property type="generic name" value="Demegestone"/>
</dbReference>
<dbReference type="DrugBank" id="DB00304">
    <property type="generic name" value="Desogestrel"/>
</dbReference>
<dbReference type="DrugBank" id="DB09123">
    <property type="generic name" value="Dienogest"/>
</dbReference>
<dbReference type="DrugBank" id="DB01395">
    <property type="generic name" value="Drospirenone"/>
</dbReference>
<dbReference type="DrugBank" id="DB00378">
    <property type="generic name" value="Dydrogesterone"/>
</dbReference>
<dbReference type="DrugBank" id="DB11219">
    <property type="generic name" value="Enzacamene"/>
</dbReference>
<dbReference type="DrugBank" id="DB00823">
    <property type="generic name" value="Ethynodiol diacetate"/>
</dbReference>
<dbReference type="DrugBank" id="DB00294">
    <property type="generic name" value="Etonogestrel"/>
</dbReference>
<dbReference type="DrugBank" id="DB13867">
    <property type="generic name" value="Fluticasone"/>
</dbReference>
<dbReference type="DrugBank" id="DB08906">
    <property type="generic name" value="Fluticasone furoate"/>
</dbReference>
<dbReference type="DrugBank" id="DB00588">
    <property type="generic name" value="Fluticasone propionate"/>
</dbReference>
<dbReference type="DrugBank" id="DB06730">
    <property type="generic name" value="Gestodene"/>
</dbReference>
<dbReference type="DrugBank" id="DB11619">
    <property type="generic name" value="Gestrinone"/>
</dbReference>
<dbReference type="DrugBank" id="DB11064">
    <property type="generic name" value="Homosalate"/>
</dbReference>
<dbReference type="DrugBank" id="DB06789">
    <property type="generic name" value="Hydroxyprogesterone caproate"/>
</dbReference>
<dbReference type="DrugBank" id="DB00367">
    <property type="generic name" value="Levonorgestrel"/>
</dbReference>
<dbReference type="DrugBank" id="DB00431">
    <property type="generic name" value="Lindane"/>
</dbReference>
<dbReference type="DrugBank" id="DB16221">
    <property type="generic name" value="Lonaprisan"/>
</dbReference>
<dbReference type="DrugBank" id="DB09124">
    <property type="generic name" value="Medrogestone"/>
</dbReference>
<dbReference type="DrugBank" id="DB00603">
    <property type="generic name" value="Medroxyprogesterone acetate"/>
</dbReference>
<dbReference type="DrugBank" id="DB19378">
    <property type="generic name" value="Megestrol"/>
</dbReference>
<dbReference type="DrugBank" id="DB00351">
    <property type="generic name" value="Megestrol acetate"/>
</dbReference>
<dbReference type="DrugBank" id="DB02998">
    <property type="generic name" value="Metribolone"/>
</dbReference>
<dbReference type="DrugBank" id="DB00834">
    <property type="generic name" value="Mifepristone"/>
</dbReference>
<dbReference type="DrugBank" id="DB00648">
    <property type="generic name" value="Mitotane"/>
</dbReference>
<dbReference type="DrugBank" id="DB00764">
    <property type="generic name" value="Mometasone"/>
</dbReference>
<dbReference type="DrugBank" id="DB14512">
    <property type="generic name" value="Mometasone furoate"/>
</dbReference>
<dbReference type="DrugBank" id="DB06713">
    <property type="generic name" value="Norelgestromin"/>
</dbReference>
<dbReference type="DrugBank" id="DB00717">
    <property type="generic name" value="Norethisterone"/>
</dbReference>
<dbReference type="DrugBank" id="DB00957">
    <property type="generic name" value="Norgestimate"/>
</dbReference>
<dbReference type="DrugBank" id="DB09389">
    <property type="generic name" value="Norgestrel"/>
</dbReference>
<dbReference type="DrugBank" id="DB12637">
    <property type="generic name" value="Onapristone"/>
</dbReference>
<dbReference type="DrugBank" id="DB15585">
    <property type="generic name" value="ORG-31710"/>
</dbReference>
<dbReference type="DrugBank" id="DB01428">
    <property type="generic name" value="Oxybenzone"/>
</dbReference>
<dbReference type="DrugBank" id="DB02746">
    <property type="generic name" value="Phthalic Acid"/>
</dbReference>
<dbReference type="DrugBank" id="DB00396">
    <property type="generic name" value="Progesterone"/>
</dbReference>
<dbReference type="DrugBank" id="DB14583">
    <property type="generic name" value="Segesterone acetate"/>
</dbReference>
<dbReference type="DrugBank" id="DB00421">
    <property type="generic name" value="Spironolactone"/>
</dbReference>
<dbReference type="DrugBank" id="DB04787">
    <property type="generic name" value="Tanaproget"/>
</dbReference>
<dbReference type="DrugBank" id="DB05253">
    <property type="generic name" value="Telapristone acetate"/>
</dbReference>
<dbReference type="DrugBank" id="DB08867">
    <property type="generic name" value="Ulipristal"/>
</dbReference>
<dbReference type="DrugBank" id="DB11971">
    <property type="generic name" value="Vilaprisan"/>
</dbReference>
<dbReference type="DrugCentral" id="P06401"/>
<dbReference type="GuidetoPHARMACOLOGY" id="627"/>
<dbReference type="SwissLipids" id="SLP:000001574"/>
<dbReference type="TCDB" id="9.B.208.1.5">
    <property type="family name" value="the vitamin d3 receptor (vdr) family"/>
</dbReference>
<dbReference type="GlyGen" id="P06401">
    <property type="glycosylation" value="3 sites, 1 O-linked glycan (1 site)"/>
</dbReference>
<dbReference type="iPTMnet" id="P06401"/>
<dbReference type="PhosphoSitePlus" id="P06401"/>
<dbReference type="SwissPalm" id="P06401"/>
<dbReference type="BioMuta" id="PGR"/>
<dbReference type="DMDM" id="90110048"/>
<dbReference type="jPOST" id="P06401"/>
<dbReference type="MassIVE" id="P06401"/>
<dbReference type="PaxDb" id="9606-ENSP00000325120"/>
<dbReference type="PeptideAtlas" id="P06401"/>
<dbReference type="ProteomicsDB" id="51901">
    <molecule id="P06401-1"/>
</dbReference>
<dbReference type="ProteomicsDB" id="51902">
    <molecule id="P06401-2"/>
</dbReference>
<dbReference type="ProteomicsDB" id="5919"/>
<dbReference type="ProteomicsDB" id="74334"/>
<dbReference type="Antibodypedia" id="1685">
    <property type="antibodies" value="3138 antibodies from 57 providers"/>
</dbReference>
<dbReference type="CPTC" id="P06401">
    <property type="antibodies" value="2 antibodies"/>
</dbReference>
<dbReference type="DNASU" id="5241"/>
<dbReference type="Ensembl" id="ENST00000263463.9">
    <molecule id="P06401-5"/>
    <property type="protein sequence ID" value="ENSP00000263463.5"/>
    <property type="gene ID" value="ENSG00000082175.16"/>
</dbReference>
<dbReference type="Ensembl" id="ENST00000325455.10">
    <molecule id="P06401-1"/>
    <property type="protein sequence ID" value="ENSP00000325120.5"/>
    <property type="gene ID" value="ENSG00000082175.16"/>
</dbReference>
<dbReference type="Ensembl" id="ENST00000534013.5">
    <molecule id="P06401-3"/>
    <property type="protein sequence ID" value="ENSP00000436561.1"/>
    <property type="gene ID" value="ENSG00000082175.16"/>
</dbReference>
<dbReference type="GeneID" id="5241"/>
<dbReference type="KEGG" id="hsa:5241"/>
<dbReference type="MANE-Select" id="ENST00000325455.10">
    <property type="protein sequence ID" value="ENSP00000325120.5"/>
    <property type="RefSeq nucleotide sequence ID" value="NM_000926.4"/>
    <property type="RefSeq protein sequence ID" value="NP_000917.3"/>
</dbReference>
<dbReference type="UCSC" id="uc001pgh.3">
    <molecule id="P06401-1"/>
    <property type="organism name" value="human"/>
</dbReference>
<dbReference type="AGR" id="HGNC:8910"/>
<dbReference type="CTD" id="5241"/>
<dbReference type="DisGeNET" id="5241"/>
<dbReference type="GeneCards" id="PGR"/>
<dbReference type="HGNC" id="HGNC:8910">
    <property type="gene designation" value="PGR"/>
</dbReference>
<dbReference type="HPA" id="ENSG00000082175">
    <property type="expression patterns" value="Group enriched (cervix, endometrium, fallopian tube, smooth muscle)"/>
</dbReference>
<dbReference type="MalaCards" id="PGR"/>
<dbReference type="MIM" id="607311">
    <property type="type" value="gene"/>
</dbReference>
<dbReference type="neXtProt" id="NX_P06401"/>
<dbReference type="OpenTargets" id="ENSG00000082175"/>
<dbReference type="PharmGKB" id="PA266"/>
<dbReference type="VEuPathDB" id="HostDB:ENSG00000082175"/>
<dbReference type="eggNOG" id="KOG3575">
    <property type="taxonomic scope" value="Eukaryota"/>
</dbReference>
<dbReference type="GeneTree" id="ENSGT00940000159713"/>
<dbReference type="HOGENOM" id="CLU_014081_0_0_1"/>
<dbReference type="InParanoid" id="P06401"/>
<dbReference type="OMA" id="PDLILNX"/>
<dbReference type="OrthoDB" id="8580220at2759"/>
<dbReference type="PAN-GO" id="P06401">
    <property type="GO annotations" value="4 GO annotations based on evolutionary models"/>
</dbReference>
<dbReference type="PhylomeDB" id="P06401"/>
<dbReference type="TreeFam" id="TF106510"/>
<dbReference type="PathwayCommons" id="P06401"/>
<dbReference type="Reactome" id="R-HSA-1251985">
    <property type="pathway name" value="Nuclear signaling by ERBB4"/>
</dbReference>
<dbReference type="Reactome" id="R-HSA-3371497">
    <property type="pathway name" value="HSP90 chaperone cycle for steroid hormone receptors (SHR) in the presence of ligand"/>
</dbReference>
<dbReference type="Reactome" id="R-HSA-383280">
    <property type="pathway name" value="Nuclear Receptor transcription pathway"/>
</dbReference>
<dbReference type="Reactome" id="R-HSA-4090294">
    <property type="pathway name" value="SUMOylation of intracellular receptors"/>
</dbReference>
<dbReference type="Reactome" id="R-HSA-9018519">
    <property type="pathway name" value="Estrogen-dependent gene expression"/>
</dbReference>
<dbReference type="SignaLink" id="P06401"/>
<dbReference type="SIGNOR" id="P06401"/>
<dbReference type="BioGRID-ORCS" id="5241">
    <property type="hits" value="9 hits in 1179 CRISPR screens"/>
</dbReference>
<dbReference type="CD-CODE" id="462A97B5">
    <property type="entry name" value="Leucocyte nuclear body"/>
</dbReference>
<dbReference type="ChiTaRS" id="PGR">
    <property type="organism name" value="human"/>
</dbReference>
<dbReference type="EvolutionaryTrace" id="P06401"/>
<dbReference type="GeneWiki" id="Progesterone_receptor"/>
<dbReference type="GenomeRNAi" id="5241"/>
<dbReference type="Pharos" id="P06401">
    <property type="development level" value="Tclin"/>
</dbReference>
<dbReference type="PRO" id="PR:P06401"/>
<dbReference type="Proteomes" id="UP000005640">
    <property type="component" value="Chromosome 11"/>
</dbReference>
<dbReference type="RNAct" id="P06401">
    <property type="molecule type" value="protein"/>
</dbReference>
<dbReference type="Bgee" id="ENSG00000082175">
    <property type="expression patterns" value="Expressed in endometrium and 138 other cell types or tissues"/>
</dbReference>
<dbReference type="ExpressionAtlas" id="P06401">
    <property type="expression patterns" value="baseline and differential"/>
</dbReference>
<dbReference type="GO" id="GO:0000785">
    <property type="term" value="C:chromatin"/>
    <property type="evidence" value="ECO:0000314"/>
    <property type="project" value="UniProt"/>
</dbReference>
<dbReference type="GO" id="GO:0005829">
    <property type="term" value="C:cytosol"/>
    <property type="evidence" value="ECO:0000304"/>
    <property type="project" value="Reactome"/>
</dbReference>
<dbReference type="GO" id="GO:0005741">
    <property type="term" value="C:mitochondrial outer membrane"/>
    <property type="evidence" value="ECO:0007669"/>
    <property type="project" value="UniProtKB-SubCell"/>
</dbReference>
<dbReference type="GO" id="GO:0005654">
    <property type="term" value="C:nucleoplasm"/>
    <property type="evidence" value="ECO:0000304"/>
    <property type="project" value="Reactome"/>
</dbReference>
<dbReference type="GO" id="GO:0005634">
    <property type="term" value="C:nucleus"/>
    <property type="evidence" value="ECO:0000318"/>
    <property type="project" value="GO_Central"/>
</dbReference>
<dbReference type="GO" id="GO:0005886">
    <property type="term" value="C:plasma membrane"/>
    <property type="evidence" value="ECO:0000315"/>
    <property type="project" value="UniProt"/>
</dbReference>
<dbReference type="GO" id="GO:0051117">
    <property type="term" value="F:ATPase binding"/>
    <property type="evidence" value="ECO:0000314"/>
    <property type="project" value="MGI"/>
</dbReference>
<dbReference type="GO" id="GO:0003677">
    <property type="term" value="F:DNA binding"/>
    <property type="evidence" value="ECO:0000304"/>
    <property type="project" value="ProtInc"/>
</dbReference>
<dbReference type="GO" id="GO:0001228">
    <property type="term" value="F:DNA-binding transcription activator activity, RNA polymerase II-specific"/>
    <property type="evidence" value="ECO:0000314"/>
    <property type="project" value="NTNU_SB"/>
</dbReference>
<dbReference type="GO" id="GO:0000981">
    <property type="term" value="F:DNA-binding transcription factor activity, RNA polymerase II-specific"/>
    <property type="evidence" value="ECO:0000247"/>
    <property type="project" value="NTNU_SB"/>
</dbReference>
<dbReference type="GO" id="GO:0019899">
    <property type="term" value="F:enzyme binding"/>
    <property type="evidence" value="ECO:0000353"/>
    <property type="project" value="UniProtKB"/>
</dbReference>
<dbReference type="GO" id="GO:0034056">
    <property type="term" value="F:estrogen response element binding"/>
    <property type="evidence" value="ECO:0000318"/>
    <property type="project" value="GO_Central"/>
</dbReference>
<dbReference type="GO" id="GO:0042802">
    <property type="term" value="F:identical protein binding"/>
    <property type="evidence" value="ECO:0000353"/>
    <property type="project" value="IntAct"/>
</dbReference>
<dbReference type="GO" id="GO:0004879">
    <property type="term" value="F:nuclear receptor activity"/>
    <property type="evidence" value="ECO:0000318"/>
    <property type="project" value="GO_Central"/>
</dbReference>
<dbReference type="GO" id="GO:0003707">
    <property type="term" value="F:nuclear steroid receptor activity"/>
    <property type="evidence" value="ECO:0000314"/>
    <property type="project" value="UniProt"/>
</dbReference>
<dbReference type="GO" id="GO:0000978">
    <property type="term" value="F:RNA polymerase II cis-regulatory region sequence-specific DNA binding"/>
    <property type="evidence" value="ECO:0000314"/>
    <property type="project" value="NTNU_SB"/>
</dbReference>
<dbReference type="GO" id="GO:0005102">
    <property type="term" value="F:signaling receptor binding"/>
    <property type="evidence" value="ECO:0000353"/>
    <property type="project" value="UniProtKB"/>
</dbReference>
<dbReference type="GO" id="GO:0005496">
    <property type="term" value="F:steroid binding"/>
    <property type="evidence" value="ECO:0007669"/>
    <property type="project" value="UniProtKB-KW"/>
</dbReference>
<dbReference type="GO" id="GO:0001223">
    <property type="term" value="F:transcription coactivator binding"/>
    <property type="evidence" value="ECO:0000353"/>
    <property type="project" value="ARUK-UCL"/>
</dbReference>
<dbReference type="GO" id="GO:0008270">
    <property type="term" value="F:zinc ion binding"/>
    <property type="evidence" value="ECO:0007669"/>
    <property type="project" value="UniProtKB-KW"/>
</dbReference>
<dbReference type="GO" id="GO:0007267">
    <property type="term" value="P:cell-cell signaling"/>
    <property type="evidence" value="ECO:0000304"/>
    <property type="project" value="ProtInc"/>
</dbReference>
<dbReference type="GO" id="GO:0002071">
    <property type="term" value="P:glandular epithelial cell maturation"/>
    <property type="evidence" value="ECO:0007669"/>
    <property type="project" value="Ensembl"/>
</dbReference>
<dbReference type="GO" id="GO:0048286">
    <property type="term" value="P:lung alveolus development"/>
    <property type="evidence" value="ECO:0007669"/>
    <property type="project" value="Ensembl"/>
</dbReference>
<dbReference type="GO" id="GO:0051457">
    <property type="term" value="P:maintenance of protein location in nucleus"/>
    <property type="evidence" value="ECO:0000315"/>
    <property type="project" value="DisProt"/>
</dbReference>
<dbReference type="GO" id="GO:0010629">
    <property type="term" value="P:negative regulation of gene expression"/>
    <property type="evidence" value="ECO:0000270"/>
    <property type="project" value="UniProtKB"/>
</dbReference>
<dbReference type="GO" id="GO:0030518">
    <property type="term" value="P:nuclear receptor-mediated steroid hormone signaling pathway"/>
    <property type="evidence" value="ECO:0000318"/>
    <property type="project" value="GO_Central"/>
</dbReference>
<dbReference type="GO" id="GO:0001542">
    <property type="term" value="P:ovulation from ovarian follicle"/>
    <property type="evidence" value="ECO:0007669"/>
    <property type="project" value="Ensembl"/>
</dbReference>
<dbReference type="GO" id="GO:0038001">
    <property type="term" value="P:paracrine signaling"/>
    <property type="evidence" value="ECO:0007669"/>
    <property type="project" value="Ensembl"/>
</dbReference>
<dbReference type="GO" id="GO:0010628">
    <property type="term" value="P:positive regulation of gene expression"/>
    <property type="evidence" value="ECO:0000303"/>
    <property type="project" value="ARUK-UCL"/>
</dbReference>
<dbReference type="GO" id="GO:0045944">
    <property type="term" value="P:positive regulation of transcription by RNA polymerase II"/>
    <property type="evidence" value="ECO:0000314"/>
    <property type="project" value="NTNU_SB"/>
</dbReference>
<dbReference type="GO" id="GO:0050847">
    <property type="term" value="P:progesterone receptor signaling pathway"/>
    <property type="evidence" value="ECO:0000314"/>
    <property type="project" value="UniProt"/>
</dbReference>
<dbReference type="GO" id="GO:0006355">
    <property type="term" value="P:regulation of DNA-templated transcription"/>
    <property type="evidence" value="ECO:0000269"/>
    <property type="project" value="DisProt"/>
</dbReference>
<dbReference type="GO" id="GO:0050678">
    <property type="term" value="P:regulation of epithelial cell proliferation"/>
    <property type="evidence" value="ECO:0007669"/>
    <property type="project" value="Ensembl"/>
</dbReference>
<dbReference type="GO" id="GO:0006357">
    <property type="term" value="P:regulation of transcription by RNA polymerase II"/>
    <property type="evidence" value="ECO:0000318"/>
    <property type="project" value="GO_Central"/>
</dbReference>
<dbReference type="GO" id="GO:0007165">
    <property type="term" value="P:signal transduction"/>
    <property type="evidence" value="ECO:0000304"/>
    <property type="project" value="ProtInc"/>
</dbReference>
<dbReference type="GO" id="GO:0060748">
    <property type="term" value="P:tertiary branching involved in mammary gland duct morphogenesis"/>
    <property type="evidence" value="ECO:0007669"/>
    <property type="project" value="Ensembl"/>
</dbReference>
<dbReference type="CDD" id="cd07172">
    <property type="entry name" value="NR_DBD_GR_PR"/>
    <property type="match status" value="1"/>
</dbReference>
<dbReference type="CDD" id="cd07074">
    <property type="entry name" value="NR_LBD_PR"/>
    <property type="match status" value="1"/>
</dbReference>
<dbReference type="DisProt" id="DP01542"/>
<dbReference type="FunFam" id="1.10.565.10:FF:000004">
    <property type="entry name" value="Androgen receptor variant"/>
    <property type="match status" value="1"/>
</dbReference>
<dbReference type="FunFam" id="3.30.50.10:FF:000027">
    <property type="entry name" value="Progesterone receptor"/>
    <property type="match status" value="1"/>
</dbReference>
<dbReference type="Gene3D" id="3.30.50.10">
    <property type="entry name" value="Erythroid Transcription Factor GATA-1, subunit A"/>
    <property type="match status" value="1"/>
</dbReference>
<dbReference type="Gene3D" id="1.10.565.10">
    <property type="entry name" value="Retinoid X Receptor"/>
    <property type="match status" value="1"/>
</dbReference>
<dbReference type="InterPro" id="IPR035500">
    <property type="entry name" value="NHR-like_dom_sf"/>
</dbReference>
<dbReference type="InterPro" id="IPR000536">
    <property type="entry name" value="Nucl_hrmn_rcpt_lig-bd"/>
</dbReference>
<dbReference type="InterPro" id="IPR050200">
    <property type="entry name" value="Nuclear_hormone_rcpt_NR3"/>
</dbReference>
<dbReference type="InterPro" id="IPR001723">
    <property type="entry name" value="Nuclear_hrmn_rcpt"/>
</dbReference>
<dbReference type="InterPro" id="IPR000128">
    <property type="entry name" value="Progest_rcpt"/>
</dbReference>
<dbReference type="InterPro" id="IPR001628">
    <property type="entry name" value="Znf_hrmn_rcpt"/>
</dbReference>
<dbReference type="InterPro" id="IPR013088">
    <property type="entry name" value="Znf_NHR/GATA"/>
</dbReference>
<dbReference type="PANTHER" id="PTHR48092">
    <property type="entry name" value="KNIRPS-RELATED PROTEIN-RELATED"/>
    <property type="match status" value="1"/>
</dbReference>
<dbReference type="Pfam" id="PF00104">
    <property type="entry name" value="Hormone_recep"/>
    <property type="match status" value="1"/>
</dbReference>
<dbReference type="Pfam" id="PF02161">
    <property type="entry name" value="Prog_receptor"/>
    <property type="match status" value="1"/>
</dbReference>
<dbReference type="Pfam" id="PF00105">
    <property type="entry name" value="zf-C4"/>
    <property type="match status" value="1"/>
</dbReference>
<dbReference type="PRINTS" id="PR00544">
    <property type="entry name" value="PROGESTRONER"/>
</dbReference>
<dbReference type="PRINTS" id="PR00398">
    <property type="entry name" value="STRDHORMONER"/>
</dbReference>
<dbReference type="PRINTS" id="PR00047">
    <property type="entry name" value="STROIDFINGER"/>
</dbReference>
<dbReference type="SMART" id="SM00430">
    <property type="entry name" value="HOLI"/>
    <property type="match status" value="1"/>
</dbReference>
<dbReference type="SMART" id="SM00399">
    <property type="entry name" value="ZnF_C4"/>
    <property type="match status" value="1"/>
</dbReference>
<dbReference type="SUPFAM" id="SSF57716">
    <property type="entry name" value="Glucocorticoid receptor-like (DNA-binding domain)"/>
    <property type="match status" value="1"/>
</dbReference>
<dbReference type="SUPFAM" id="SSF48508">
    <property type="entry name" value="Nuclear receptor ligand-binding domain"/>
    <property type="match status" value="1"/>
</dbReference>
<dbReference type="PROSITE" id="PS51843">
    <property type="entry name" value="NR_LBD"/>
    <property type="match status" value="1"/>
</dbReference>
<dbReference type="PROSITE" id="PS00031">
    <property type="entry name" value="NUCLEAR_REC_DBD_1"/>
    <property type="match status" value="1"/>
</dbReference>
<dbReference type="PROSITE" id="PS51030">
    <property type="entry name" value="NUCLEAR_REC_DBD_2"/>
    <property type="match status" value="1"/>
</dbReference>
<evidence type="ECO:0000250" key="1">
    <source>
        <dbReference type="UniProtKB" id="Q00175"/>
    </source>
</evidence>
<evidence type="ECO:0000255" key="2"/>
<evidence type="ECO:0000255" key="3">
    <source>
        <dbReference type="PROSITE-ProRule" id="PRU00407"/>
    </source>
</evidence>
<evidence type="ECO:0000255" key="4">
    <source>
        <dbReference type="PROSITE-ProRule" id="PRU01189"/>
    </source>
</evidence>
<evidence type="ECO:0000256" key="5">
    <source>
        <dbReference type="SAM" id="MobiDB-lite"/>
    </source>
</evidence>
<evidence type="ECO:0000269" key="6">
    <source>
    </source>
</evidence>
<evidence type="ECO:0000269" key="7">
    <source>
    </source>
</evidence>
<evidence type="ECO:0000269" key="8">
    <source>
    </source>
</evidence>
<evidence type="ECO:0000269" key="9">
    <source>
    </source>
</evidence>
<evidence type="ECO:0000269" key="10">
    <source>
    </source>
</evidence>
<evidence type="ECO:0000269" key="11">
    <source>
    </source>
</evidence>
<evidence type="ECO:0000269" key="12">
    <source>
    </source>
</evidence>
<evidence type="ECO:0000269" key="13">
    <source>
    </source>
</evidence>
<evidence type="ECO:0000269" key="14">
    <source>
    </source>
</evidence>
<evidence type="ECO:0000269" key="15">
    <source>
    </source>
</evidence>
<evidence type="ECO:0000269" key="16">
    <source>
    </source>
</evidence>
<evidence type="ECO:0000269" key="17">
    <source>
    </source>
</evidence>
<evidence type="ECO:0000269" key="18">
    <source>
    </source>
</evidence>
<evidence type="ECO:0000269" key="19">
    <source>
    </source>
</evidence>
<evidence type="ECO:0000269" key="20">
    <source>
    </source>
</evidence>
<evidence type="ECO:0000269" key="21">
    <source>
    </source>
</evidence>
<evidence type="ECO:0000269" key="22">
    <source>
    </source>
</evidence>
<evidence type="ECO:0000269" key="23">
    <source>
    </source>
</evidence>
<evidence type="ECO:0000269" key="24">
    <source>
    </source>
</evidence>
<evidence type="ECO:0000269" key="25">
    <source>
    </source>
</evidence>
<evidence type="ECO:0000269" key="26">
    <source>
    </source>
</evidence>
<evidence type="ECO:0000269" key="27">
    <source>
    </source>
</evidence>
<evidence type="ECO:0000269" key="28">
    <source>
    </source>
</evidence>
<evidence type="ECO:0000269" key="29">
    <source>
    </source>
</evidence>
<evidence type="ECO:0000269" key="30">
    <source>
    </source>
</evidence>
<evidence type="ECO:0000269" key="31">
    <source>
    </source>
</evidence>
<evidence type="ECO:0000269" key="32">
    <source>
    </source>
</evidence>
<evidence type="ECO:0000269" key="33">
    <source>
    </source>
</evidence>
<evidence type="ECO:0000269" key="34">
    <source>
    </source>
</evidence>
<evidence type="ECO:0000269" key="35">
    <source>
    </source>
</evidence>
<evidence type="ECO:0000269" key="36">
    <source>
    </source>
</evidence>
<evidence type="ECO:0000269" key="37">
    <source>
    </source>
</evidence>
<evidence type="ECO:0000269" key="38">
    <source ref="3"/>
</evidence>
<evidence type="ECO:0000269" key="39">
    <source ref="8"/>
</evidence>
<evidence type="ECO:0000303" key="40">
    <source>
    </source>
</evidence>
<evidence type="ECO:0000303" key="41">
    <source>
    </source>
</evidence>
<evidence type="ECO:0000303" key="42">
    <source ref="4"/>
</evidence>
<evidence type="ECO:0000305" key="43"/>
<evidence type="ECO:0000305" key="44">
    <source>
    </source>
</evidence>
<evidence type="ECO:0000305" key="45">
    <source>
    </source>
</evidence>
<evidence type="ECO:0007744" key="46">
    <source>
    </source>
</evidence>
<evidence type="ECO:0007829" key="47">
    <source>
        <dbReference type="PDB" id="1SQN"/>
    </source>
</evidence>
<evidence type="ECO:0007829" key="48">
    <source>
        <dbReference type="PDB" id="5CC0"/>
    </source>
</evidence>
<sequence length="933" mass="98981">MTELKAKGPRAPHVAGGPPSPEVGSPLLCRPAAGPFPGSQTSDTLPEVSAIPISLDGLLFPRPCQGQDPSDEKTQDQQSLSDVEGAYSRAEATRGAGGSSSSPPEKDSGLLDSVLDTLLAPSGPGQSQPSPPACEVTSSWCLFGPELPEDPPAAPATQRVLSPLMSRSGCKVGDSSGTAAAHKVLPRGLSPARQLLLPASESPHWSGAPVKPSPQAAAVEVEEEDGSESEESAGPLLKGKPRALGGAAAGGGAAAVPPGAAAGGVALVPKEDSRFSAPRVALVEQDAPMAPGRSPLATTVMDFIHVPILPLNHALLAARTRQLLEDESYDGGAGAASAFAPPRSSPCASSTPVAVGDFPDCAYPPDAEPKDDAYPLYSDFQPPALKIKEEEEGAEASARSPRSYLVAGANPAAFPDFPLGPPPPLPPRATPSRPGEAAVTAAPASASVSSASSSGSTLECILYKAEGAPPQQGPFAPPPCKAPGASGCLLPRDGLPSTSASAAAAGAAPALYPALGLNGLPQLGYQAAVLKEGLPQVYPPYLNYLRPDSEASQSPQYSFESLPQKICLICGDEASGCHYGVLTCGSCKVFFKRAMEGQHNYLCAGRNDCIVDKIRRKNCPACRLRKCCQAGMVLGGRKFKKFNKVRVVRALDAVALPQPVGVPNESQALSQRFTFSPGQDIQLIPPLINLLMSIEPDVIYAGHDNTKPDTSSSLLTSLNQLGERQLLSVVKWSKSLPGFRNLHIDDQITLIQYSWMSLMVFGLGWRSYKHVSGQMLYFAPDLILNEQRMKESSFYSLCLTMWQIPQEFVKLQVSQEEFLCMKVLLLLNTIPLEGLRSQTQFEEMRSSYIRELIKAIGLRQKGVVSSSQRFYQLTKLLDNLHDLVKQLHLYCLNTFIQSRALSVEFPEMMSEVIAAQLPKILAGMVKPLLFHKK</sequence>
<comment type="function">
    <text evidence="8 18 29 36 43">The steroid hormones and their receptors are involved in the regulation of eukaryotic gene expression and affect cellular proliferation and differentiation in target tissues. Depending on the isoform, progesterone receptor functions as a transcriptional activator or repressor.</text>
</comment>
<comment type="function">
    <molecule>Isoform A</molecule>
    <text evidence="31 32 33 43 44">Ligand-dependent transdominant repressor of steroid hormone receptor transcriptional activity including repression of its isoform B, MR and ER. Transrepressional activity may involve recruitment of corepressor NCOR2.</text>
</comment>
<comment type="function">
    <molecule>Isoform B</molecule>
    <text evidence="31">Transcriptional activator of several progesteron-dependent promoters in a variety of cell types. Involved in activation of SRC-dependent MAPK signaling on hormone stimulation.</text>
</comment>
<comment type="function">
    <molecule>Isoform 4</molecule>
    <text>Increases mitochondrial membrane potential and cellular respiration upon stimulation by progesterone.</text>
</comment>
<comment type="subunit">
    <text evidence="1 8 12 14 15 19 20 22 24">Interacts with SMARD1 and UNC45A. Interacts with CUEDC2; the interaction promotes ubiquitination, decreases sumoylation, and represses transcriptional activity. Interacts with PIAS3; the interaction promotes sumoylation of PR in a hormone-dependent manner, inhibits DNA-binding, and alters nuclear export. Interacts with SP1; the interaction requires ligand-induced phosphorylation on Ser-345 by ERK1/2 MAPK. Interacts with PRMT2. Isoform A interacts with NCOR2. Isoform B (but not isoform A) interacts with NCOA2 and NCOA1. Isoform B (but not isoform A) interacts with KLF9. Interacts with GTF2B (PubMed:1517211).</text>
</comment>
<comment type="interaction">
    <interactant intactId="EBI-78539">
        <id>P06401</id>
    </interactant>
    <interactant intactId="EBI-1248228">
        <id>Q9H467</id>
        <label>CUEDC2</label>
    </interactant>
    <organismsDiffer>false</organismsDiffer>
    <experiments>9</experiments>
</comment>
<comment type="interaction">
    <interactant intactId="EBI-78539">
        <id>P06401</id>
    </interactant>
    <interactant intactId="EBI-78473">
        <id>P03372</id>
        <label>ESR1</label>
    </interactant>
    <organismsDiffer>false</organismsDiffer>
    <experiments>20</experiments>
</comment>
<comment type="interaction">
    <interactant intactId="EBI-78539">
        <id>P06401</id>
    </interactant>
    <interactant intactId="EBI-78539">
        <id>P06401</id>
        <label>PGR</label>
    </interactant>
    <organismsDiffer>false</organismsDiffer>
    <experiments>2</experiments>
</comment>
<comment type="interaction">
    <interactant intactId="EBI-78539">
        <id>P06401</id>
    </interactant>
    <interactant intactId="EBI-518675">
        <id>P40763</id>
        <label>STAT3</label>
    </interactant>
    <organismsDiffer>false</organismsDiffer>
    <experiments>3</experiments>
</comment>
<comment type="interaction">
    <interactant intactId="EBI-12590474">
        <id>P06401-1</id>
    </interactant>
    <interactant intactId="EBI-78473">
        <id>P03372</id>
        <label>ESR1</label>
    </interactant>
    <organismsDiffer>false</organismsDiffer>
    <experiments>4</experiments>
</comment>
<comment type="subcellular location">
    <subcellularLocation>
        <location>Nucleus</location>
    </subcellularLocation>
    <subcellularLocation>
        <location>Cytoplasm</location>
    </subcellularLocation>
    <text>Nucleoplasmic shuttling is both hormone- and cell cycle-dependent. On hormone stimulation, retained in the cytoplasm in the G(1) and G(2)/M phases.</text>
</comment>
<comment type="subcellular location">
    <molecule>Isoform A</molecule>
    <subcellularLocation>
        <location>Nucleus</location>
    </subcellularLocation>
    <subcellularLocation>
        <location>Cytoplasm</location>
    </subcellularLocation>
    <text>Mainly nuclear.</text>
</comment>
<comment type="subcellular location">
    <molecule>Isoform 4</molecule>
    <subcellularLocation>
        <location evidence="27">Mitochondrion outer membrane</location>
    </subcellularLocation>
</comment>
<comment type="alternative products">
    <event type="alternative promoter"/>
    <event type="alternative splicing"/>
    <isoform>
        <id>P06401-1</id>
        <name>B</name>
        <name>PRB</name>
        <name>PR-B</name>
        <sequence type="displayed"/>
    </isoform>
    <isoform>
        <id>P06401-2</id>
        <name>A</name>
        <name>PRA</name>
        <name>PR-A</name>
        <sequence type="described" ref="VSP_003706"/>
    </isoform>
    <isoform>
        <id>P06401-3</id>
        <name>3</name>
        <sequence type="described" ref="VSP_046942"/>
    </isoform>
    <isoform>
        <id>P06401-4</id>
        <name>4</name>
        <name>PR-M</name>
        <sequence type="described" ref="VSP_047454 VSP_047455"/>
    </isoform>
    <isoform>
        <id>P06401-5</id>
        <name>5</name>
        <name>delta4</name>
        <sequence type="described" ref="VSP_053543"/>
    </isoform>
</comment>
<comment type="tissue specificity">
    <text evidence="9">In reproductive tissues the expression of isoform A and isoform B varies as a consequence of developmental and hormonal status. Isoform A and isoform B are expressed in comparable levels in uterine glandular epithelium during the proliferative phase of the menstrual cycle. Expression of isoform B but not of isoform A persists in the glands during mid-secretory phase. In the stroma, isoform A is the predominant form throughout the cycle. Heterogeneous isoform expression between the glands of the endometrium basalis and functionalis is implying region-specific responses to hormonal stimuli.</text>
</comment>
<comment type="domain">
    <text>Composed of three domains: a modulating N-terminal domain, a DNA-binding domain and a C-terminal ligand-binding domain.</text>
</comment>
<comment type="PTM">
    <text evidence="6 7 10 16 17 20 21 22 23 24 30 34 35">Phosphorylated on multiple serine sites. Several of these sites are hormone-dependent. Phosphorylation on Ser-294 occurs preferentially on isoform B, is highly hormone-dependent and modulates ubiquitination and sumoylation on Lys-388. Phosphorylation on Ser-102 and Ser-345 also requires induction by hormone. Basal phosphorylation on Ser-81, Ser-162, Ser-190 and Ser-400 is increased in response to progesterone and can be phosphorylated in vitro by the CDK2-A1 complex. Increased levels of phosphorylation on Ser-400 also in the presence of EGF, heregulin, IGF, PMA and FBS. Phosphorylation at this site by CDK2 is ligand-independent, and increases nuclear translocation and transcriptional activity. Phosphorylation at Ser-162 and Ser-294, but not at Ser-190, is impaired during the G(2)/M phase of the cell cycle. Phosphorylation on Ser-345 by ERK1/2 MAPK is required for interaction with SP1.</text>
</comment>
<comment type="PTM">
    <text evidence="6 7 17 20 21 22 23 24 34">Sumoylation is hormone-dependent and represses transcriptional activity. Sumoylation on all three sites is enhanced by PIAS3. Desumoylated by SENP1. Sumoylation on Lys-388, the main site of sumoylation, is repressed by ubiquitination on the same site, and modulated by phosphorylation at Ser-294.</text>
</comment>
<comment type="PTM">
    <text evidence="6 7 17 21 23 24 29 34">Ubiquitination is hormone-dependent and represses sumoylation on the same site (PubMed:10628747, PubMed:10655479, PubMed:15798179, PubMed:17173941, PubMed:17717077, PubMed:18202149, PubMed:8702648). Promoted by MAPK-mediated phosphorylation on Ser-294 (PubMed:10628747, PubMed:10655479, PubMed:15798179, PubMed:17173941, PubMed:17717077, PubMed:18202149, PubMed:8702648). Ubiquitinated by UBR5, leading to its degradation: UBR5 specifically recognizes and binds ligand-bound PGR when it is not associated with coactivators (NCOAs) (PubMed:37478846). In presence of NCOAs, the UBR5-degron is not accessible, preventing its ubiquitination and degradation (PubMed:37478846).</text>
</comment>
<comment type="PTM">
    <text evidence="25">Palmitoylated by ZDHHC7 and ZDHHC21. Palmitoylation is required for plasma membrane targeting and for rapid intracellular signaling via ERK and AKT kinases and cAMP generation.</text>
</comment>
<comment type="miscellaneous">
    <molecule>Isoform B</molecule>
    <text>Produced by alternative promoter usage.</text>
</comment>
<comment type="miscellaneous">
    <molecule>Isoform A</molecule>
    <text evidence="43">Produced by alternative promoter usage.</text>
</comment>
<comment type="miscellaneous">
    <molecule>Isoform 3</molecule>
    <text evidence="43">Produced by alternative splicing of isoform B.</text>
</comment>
<comment type="miscellaneous">
    <molecule>Isoform 4</molecule>
    <text evidence="43">Produced by alternative promoter usage.</text>
</comment>
<comment type="miscellaneous">
    <molecule>Isoform 5</molecule>
    <text evidence="43">Produced by alternative splicing of isoform B.</text>
</comment>
<comment type="similarity">
    <text evidence="43">Belongs to the nuclear hormone receptor family. NR3 subfamily.</text>
</comment>
<comment type="online information" name="Wikipedia">
    <link uri="https://en.wikipedia.org/wiki/Progesterone_receptor"/>
    <text>Progesterone receptor entry</text>
</comment>